<name>RS9_THET8</name>
<keyword id="KW-0002">3D-structure</keyword>
<keyword id="KW-0903">Direct protein sequencing</keyword>
<keyword id="KW-1185">Reference proteome</keyword>
<keyword id="KW-0687">Ribonucleoprotein</keyword>
<keyword id="KW-0689">Ribosomal protein</keyword>
<keyword id="KW-0694">RNA-binding</keyword>
<keyword id="KW-0699">rRNA-binding</keyword>
<keyword id="KW-0820">tRNA-binding</keyword>
<comment type="function">
    <text>Part of the top of the head of the 30S subunit. The C-terminal region penetrates the head emerging in the P-site where it contacts tRNA.</text>
</comment>
<comment type="subunit">
    <text>Part of the 30S ribosomal subunit. Contacts proteins S7 and S10.</text>
</comment>
<comment type="mass spectrometry" mass="14384.0" method="MALDI" evidence="1"/>
<comment type="similarity">
    <text evidence="2">Belongs to the universal ribosomal protein uS9 family.</text>
</comment>
<sequence length="128" mass="14383">MEQYYGTGRRKEAVARVFLRPGNGKVTVNGQDFNEYFQGLVRAVAALEPLRAVDALGHFDAYITVRGGGKSGQIDAIKLGIARALVQYNPDYRAKLKPLGFLTRDARVVERKKYGKHKARRAPQYSKR</sequence>
<proteinExistence type="evidence at protein level"/>
<accession>P80374</accession>
<accession>Q5SIB0</accession>
<accession>Q9ACJ9</accession>
<feature type="chain" id="PRO_0000111431" description="Small ribosomal subunit protein uS9">
    <location>
        <begin position="1"/>
        <end position="128"/>
    </location>
</feature>
<feature type="strand" evidence="3">
    <location>
        <begin position="4"/>
        <end position="6"/>
    </location>
</feature>
<feature type="strand" evidence="3">
    <location>
        <begin position="9"/>
        <end position="12"/>
    </location>
</feature>
<feature type="strand" evidence="3">
    <location>
        <begin position="14"/>
        <end position="23"/>
    </location>
</feature>
<feature type="strand" evidence="3">
    <location>
        <begin position="26"/>
        <end position="31"/>
    </location>
</feature>
<feature type="helix" evidence="3">
    <location>
        <begin position="33"/>
        <end position="36"/>
    </location>
</feature>
<feature type="strand" evidence="3">
    <location>
        <begin position="37"/>
        <end position="39"/>
    </location>
</feature>
<feature type="helix" evidence="3">
    <location>
        <begin position="43"/>
        <end position="47"/>
    </location>
</feature>
<feature type="helix" evidence="3">
    <location>
        <begin position="48"/>
        <end position="52"/>
    </location>
</feature>
<feature type="turn" evidence="3">
    <location>
        <begin position="56"/>
        <end position="58"/>
    </location>
</feature>
<feature type="strand" evidence="3">
    <location>
        <begin position="59"/>
        <end position="68"/>
    </location>
</feature>
<feature type="helix" evidence="3">
    <location>
        <begin position="70"/>
        <end position="88"/>
    </location>
</feature>
<feature type="helix" evidence="3">
    <location>
        <begin position="90"/>
        <end position="92"/>
    </location>
</feature>
<feature type="helix" evidence="3">
    <location>
        <begin position="93"/>
        <end position="96"/>
    </location>
</feature>
<feature type="helix" evidence="3">
    <location>
        <begin position="97"/>
        <end position="99"/>
    </location>
</feature>
<feature type="turn" evidence="3">
    <location>
        <begin position="100"/>
        <end position="102"/>
    </location>
</feature>
<feature type="strand" evidence="3">
    <location>
        <begin position="116"/>
        <end position="118"/>
    </location>
</feature>
<dbReference type="EMBL" id="AP008226">
    <property type="protein sequence ID" value="BAD71287.1"/>
    <property type="molecule type" value="Genomic_DNA"/>
</dbReference>
<dbReference type="RefSeq" id="WP_011228699.1">
    <property type="nucleotide sequence ID" value="NC_006461.1"/>
</dbReference>
<dbReference type="RefSeq" id="YP_144730.1">
    <property type="nucleotide sequence ID" value="NC_006461.1"/>
</dbReference>
<dbReference type="PDB" id="1FJG">
    <property type="method" value="X-ray"/>
    <property type="resolution" value="3.00 A"/>
    <property type="chains" value="I=1-128"/>
</dbReference>
<dbReference type="PDB" id="1HNW">
    <property type="method" value="X-ray"/>
    <property type="resolution" value="3.40 A"/>
    <property type="chains" value="I=1-128"/>
</dbReference>
<dbReference type="PDB" id="1HNX">
    <property type="method" value="X-ray"/>
    <property type="resolution" value="3.40 A"/>
    <property type="chains" value="I=1-128"/>
</dbReference>
<dbReference type="PDB" id="1HNZ">
    <property type="method" value="X-ray"/>
    <property type="resolution" value="3.30 A"/>
    <property type="chains" value="I=1-128"/>
</dbReference>
<dbReference type="PDB" id="1HR0">
    <property type="method" value="X-ray"/>
    <property type="resolution" value="3.20 A"/>
    <property type="chains" value="I=1-128"/>
</dbReference>
<dbReference type="PDB" id="1I94">
    <property type="method" value="X-ray"/>
    <property type="resolution" value="3.20 A"/>
    <property type="chains" value="I=1-128"/>
</dbReference>
<dbReference type="PDB" id="1I95">
    <property type="method" value="X-ray"/>
    <property type="resolution" value="4.50 A"/>
    <property type="chains" value="I=1-128"/>
</dbReference>
<dbReference type="PDB" id="1I96">
    <property type="method" value="X-ray"/>
    <property type="resolution" value="4.20 A"/>
    <property type="chains" value="I=1-128"/>
</dbReference>
<dbReference type="PDB" id="1I97">
    <property type="method" value="X-ray"/>
    <property type="resolution" value="4.50 A"/>
    <property type="chains" value="I=1-128"/>
</dbReference>
<dbReference type="PDB" id="1IBK">
    <property type="method" value="X-ray"/>
    <property type="resolution" value="3.31 A"/>
    <property type="chains" value="I=1-128"/>
</dbReference>
<dbReference type="PDB" id="1IBL">
    <property type="method" value="X-ray"/>
    <property type="resolution" value="3.11 A"/>
    <property type="chains" value="I=1-128"/>
</dbReference>
<dbReference type="PDB" id="1IBM">
    <property type="method" value="X-ray"/>
    <property type="resolution" value="3.31 A"/>
    <property type="chains" value="I=1-128"/>
</dbReference>
<dbReference type="PDB" id="1J5E">
    <property type="method" value="X-ray"/>
    <property type="resolution" value="3.05 A"/>
    <property type="chains" value="I=1-128"/>
</dbReference>
<dbReference type="PDB" id="1JGO">
    <property type="method" value="X-ray"/>
    <property type="resolution" value="5.60 A"/>
    <property type="chains" value="L=1-128"/>
</dbReference>
<dbReference type="PDB" id="1JGP">
    <property type="method" value="X-ray"/>
    <property type="resolution" value="7.00 A"/>
    <property type="chains" value="L=1-128"/>
</dbReference>
<dbReference type="PDB" id="1JGQ">
    <property type="method" value="X-ray"/>
    <property type="resolution" value="5.00 A"/>
    <property type="chains" value="L=1-128"/>
</dbReference>
<dbReference type="PDB" id="1ML5">
    <property type="method" value="EM"/>
    <property type="resolution" value="14.00 A"/>
    <property type="chains" value="L=1-128"/>
</dbReference>
<dbReference type="PDB" id="1N32">
    <property type="method" value="X-ray"/>
    <property type="resolution" value="3.00 A"/>
    <property type="chains" value="I=1-128"/>
</dbReference>
<dbReference type="PDB" id="1N33">
    <property type="method" value="X-ray"/>
    <property type="resolution" value="3.35 A"/>
    <property type="chains" value="I=1-128"/>
</dbReference>
<dbReference type="PDB" id="1N34">
    <property type="method" value="X-ray"/>
    <property type="resolution" value="3.80 A"/>
    <property type="chains" value="I=1-128"/>
</dbReference>
<dbReference type="PDB" id="1N36">
    <property type="method" value="X-ray"/>
    <property type="resolution" value="3.65 A"/>
    <property type="chains" value="I=1-128"/>
</dbReference>
<dbReference type="PDB" id="1VVJ">
    <property type="method" value="X-ray"/>
    <property type="resolution" value="3.44 A"/>
    <property type="chains" value="QI/XI=1-128"/>
</dbReference>
<dbReference type="PDB" id="1VY4">
    <property type="method" value="X-ray"/>
    <property type="resolution" value="2.60 A"/>
    <property type="chains" value="AI/CI=1-128"/>
</dbReference>
<dbReference type="PDB" id="1VY5">
    <property type="method" value="X-ray"/>
    <property type="resolution" value="2.55 A"/>
    <property type="chains" value="AI/CI=1-128"/>
</dbReference>
<dbReference type="PDB" id="1VY6">
    <property type="method" value="X-ray"/>
    <property type="resolution" value="2.90 A"/>
    <property type="chains" value="AI/CI=1-128"/>
</dbReference>
<dbReference type="PDB" id="1VY7">
    <property type="method" value="X-ray"/>
    <property type="resolution" value="2.80 A"/>
    <property type="chains" value="AI/CI=1-128"/>
</dbReference>
<dbReference type="PDB" id="1XMO">
    <property type="method" value="X-ray"/>
    <property type="resolution" value="3.25 A"/>
    <property type="chains" value="I=1-128"/>
</dbReference>
<dbReference type="PDB" id="1XMQ">
    <property type="method" value="X-ray"/>
    <property type="resolution" value="3.00 A"/>
    <property type="chains" value="I=1-128"/>
</dbReference>
<dbReference type="PDB" id="1XNQ">
    <property type="method" value="X-ray"/>
    <property type="resolution" value="3.05 A"/>
    <property type="chains" value="I=1-128"/>
</dbReference>
<dbReference type="PDB" id="1XNR">
    <property type="method" value="X-ray"/>
    <property type="resolution" value="3.10 A"/>
    <property type="chains" value="I=1-128"/>
</dbReference>
<dbReference type="PDB" id="2E5L">
    <property type="method" value="X-ray"/>
    <property type="resolution" value="3.30 A"/>
    <property type="chains" value="I=1-128"/>
</dbReference>
<dbReference type="PDB" id="2F4V">
    <property type="method" value="X-ray"/>
    <property type="resolution" value="3.80 A"/>
    <property type="chains" value="I=1-128"/>
</dbReference>
<dbReference type="PDB" id="2HHH">
    <property type="method" value="X-ray"/>
    <property type="resolution" value="3.35 A"/>
    <property type="chains" value="I=1-128"/>
</dbReference>
<dbReference type="PDB" id="2UU9">
    <property type="method" value="X-ray"/>
    <property type="resolution" value="3.10 A"/>
    <property type="chains" value="I=1-128"/>
</dbReference>
<dbReference type="PDB" id="2UUA">
    <property type="method" value="X-ray"/>
    <property type="resolution" value="2.90 A"/>
    <property type="chains" value="I=1-128"/>
</dbReference>
<dbReference type="PDB" id="2UUB">
    <property type="method" value="X-ray"/>
    <property type="resolution" value="2.90 A"/>
    <property type="chains" value="I=1-128"/>
</dbReference>
<dbReference type="PDB" id="2UUC">
    <property type="method" value="X-ray"/>
    <property type="resolution" value="3.10 A"/>
    <property type="chains" value="I=1-128"/>
</dbReference>
<dbReference type="PDB" id="2ZM6">
    <property type="method" value="X-ray"/>
    <property type="resolution" value="3.30 A"/>
    <property type="chains" value="I=1-128"/>
</dbReference>
<dbReference type="PDB" id="3OTO">
    <property type="method" value="X-ray"/>
    <property type="resolution" value="3.69 A"/>
    <property type="chains" value="I=1-128"/>
</dbReference>
<dbReference type="PDB" id="4AQY">
    <property type="method" value="X-ray"/>
    <property type="resolution" value="3.50 A"/>
    <property type="chains" value="I=1-128"/>
</dbReference>
<dbReference type="PDB" id="4B3M">
    <property type="method" value="X-ray"/>
    <property type="resolution" value="2.90 A"/>
    <property type="chains" value="I=1-128"/>
</dbReference>
<dbReference type="PDB" id="4B3R">
    <property type="method" value="X-ray"/>
    <property type="resolution" value="3.00 A"/>
    <property type="chains" value="I=1-128"/>
</dbReference>
<dbReference type="PDB" id="4B3S">
    <property type="method" value="X-ray"/>
    <property type="resolution" value="3.15 A"/>
    <property type="chains" value="I=1-128"/>
</dbReference>
<dbReference type="PDB" id="4B3T">
    <property type="method" value="X-ray"/>
    <property type="resolution" value="3.00 A"/>
    <property type="chains" value="I=1-128"/>
</dbReference>
<dbReference type="PDB" id="4DR1">
    <property type="method" value="X-ray"/>
    <property type="resolution" value="3.60 A"/>
    <property type="chains" value="I=1-128"/>
</dbReference>
<dbReference type="PDB" id="4DR2">
    <property type="method" value="X-ray"/>
    <property type="resolution" value="3.25 A"/>
    <property type="chains" value="I=1-128"/>
</dbReference>
<dbReference type="PDB" id="4DR3">
    <property type="method" value="X-ray"/>
    <property type="resolution" value="3.35 A"/>
    <property type="chains" value="I=1-128"/>
</dbReference>
<dbReference type="PDB" id="4DR4">
    <property type="method" value="X-ray"/>
    <property type="resolution" value="3.97 A"/>
    <property type="chains" value="I=1-128"/>
</dbReference>
<dbReference type="PDB" id="4DR5">
    <property type="method" value="X-ray"/>
    <property type="resolution" value="3.45 A"/>
    <property type="chains" value="I=1-128"/>
</dbReference>
<dbReference type="PDB" id="4DR6">
    <property type="method" value="X-ray"/>
    <property type="resolution" value="3.30 A"/>
    <property type="chains" value="I=1-128"/>
</dbReference>
<dbReference type="PDB" id="4DR7">
    <property type="method" value="X-ray"/>
    <property type="resolution" value="3.75 A"/>
    <property type="chains" value="I=1-128"/>
</dbReference>
<dbReference type="PDB" id="4DUY">
    <property type="method" value="X-ray"/>
    <property type="resolution" value="3.39 A"/>
    <property type="chains" value="I=1-128"/>
</dbReference>
<dbReference type="PDB" id="4DUZ">
    <property type="method" value="X-ray"/>
    <property type="resolution" value="3.65 A"/>
    <property type="chains" value="I=1-128"/>
</dbReference>
<dbReference type="PDB" id="4DV0">
    <property type="method" value="X-ray"/>
    <property type="resolution" value="3.85 A"/>
    <property type="chains" value="I=1-128"/>
</dbReference>
<dbReference type="PDB" id="4DV1">
    <property type="method" value="X-ray"/>
    <property type="resolution" value="3.85 A"/>
    <property type="chains" value="I=1-128"/>
</dbReference>
<dbReference type="PDB" id="4DV2">
    <property type="method" value="X-ray"/>
    <property type="resolution" value="3.65 A"/>
    <property type="chains" value="I=1-128"/>
</dbReference>
<dbReference type="PDB" id="4DV3">
    <property type="method" value="X-ray"/>
    <property type="resolution" value="3.55 A"/>
    <property type="chains" value="I=1-128"/>
</dbReference>
<dbReference type="PDB" id="4DV4">
    <property type="method" value="X-ray"/>
    <property type="resolution" value="3.65 A"/>
    <property type="chains" value="I=1-128"/>
</dbReference>
<dbReference type="PDB" id="4DV5">
    <property type="method" value="X-ray"/>
    <property type="resolution" value="3.68 A"/>
    <property type="chains" value="I=1-128"/>
</dbReference>
<dbReference type="PDB" id="4DV6">
    <property type="method" value="X-ray"/>
    <property type="resolution" value="3.30 A"/>
    <property type="chains" value="I=1-128"/>
</dbReference>
<dbReference type="PDB" id="4DV7">
    <property type="method" value="X-ray"/>
    <property type="resolution" value="3.29 A"/>
    <property type="chains" value="I=1-128"/>
</dbReference>
<dbReference type="PDB" id="4GKJ">
    <property type="method" value="X-ray"/>
    <property type="resolution" value="3.30 A"/>
    <property type="chains" value="I=2-128"/>
</dbReference>
<dbReference type="PDB" id="4GKK">
    <property type="method" value="X-ray"/>
    <property type="resolution" value="3.20 A"/>
    <property type="chains" value="I=2-128"/>
</dbReference>
<dbReference type="PDB" id="4JI0">
    <property type="method" value="X-ray"/>
    <property type="resolution" value="3.49 A"/>
    <property type="chains" value="I=1-128"/>
</dbReference>
<dbReference type="PDB" id="4JI1">
    <property type="method" value="X-ray"/>
    <property type="resolution" value="3.14 A"/>
    <property type="chains" value="I=1-128"/>
</dbReference>
<dbReference type="PDB" id="4JI2">
    <property type="method" value="X-ray"/>
    <property type="resolution" value="3.64 A"/>
    <property type="chains" value="I=1-128"/>
</dbReference>
<dbReference type="PDB" id="4JI3">
    <property type="method" value="X-ray"/>
    <property type="resolution" value="3.35 A"/>
    <property type="chains" value="I=1-128"/>
</dbReference>
<dbReference type="PDB" id="4JI4">
    <property type="method" value="X-ray"/>
    <property type="resolution" value="3.69 A"/>
    <property type="chains" value="I=1-128"/>
</dbReference>
<dbReference type="PDB" id="4JI5">
    <property type="method" value="X-ray"/>
    <property type="resolution" value="3.85 A"/>
    <property type="chains" value="I=1-128"/>
</dbReference>
<dbReference type="PDB" id="4JI6">
    <property type="method" value="X-ray"/>
    <property type="resolution" value="3.55 A"/>
    <property type="chains" value="I=1-128"/>
</dbReference>
<dbReference type="PDB" id="4JI7">
    <property type="method" value="X-ray"/>
    <property type="resolution" value="3.50 A"/>
    <property type="chains" value="I=1-128"/>
</dbReference>
<dbReference type="PDB" id="4JI8">
    <property type="method" value="X-ray"/>
    <property type="resolution" value="3.74 A"/>
    <property type="chains" value="I=1-128"/>
</dbReference>
<dbReference type="PDB" id="4JV5">
    <property type="method" value="X-ray"/>
    <property type="resolution" value="3.16 A"/>
    <property type="chains" value="I=2-128"/>
</dbReference>
<dbReference type="PDB" id="4JYA">
    <property type="method" value="X-ray"/>
    <property type="resolution" value="3.10 A"/>
    <property type="chains" value="I=2-128"/>
</dbReference>
<dbReference type="PDB" id="4K0K">
    <property type="method" value="X-ray"/>
    <property type="resolution" value="3.40 A"/>
    <property type="chains" value="I=2-128"/>
</dbReference>
<dbReference type="PDB" id="4KHP">
    <property type="method" value="X-ray"/>
    <property type="resolution" value="3.10 A"/>
    <property type="chains" value="I=2-128"/>
</dbReference>
<dbReference type="PDB" id="4L47">
    <property type="method" value="X-ray"/>
    <property type="resolution" value="3.22 A"/>
    <property type="chains" value="QI/XI=1-128"/>
</dbReference>
<dbReference type="PDB" id="4L71">
    <property type="method" value="X-ray"/>
    <property type="resolution" value="3.90 A"/>
    <property type="chains" value="QI/XI=1-128"/>
</dbReference>
<dbReference type="PDB" id="4LEL">
    <property type="method" value="X-ray"/>
    <property type="resolution" value="3.90 A"/>
    <property type="chains" value="QI/XI=1-128"/>
</dbReference>
<dbReference type="PDB" id="4LF4">
    <property type="method" value="X-ray"/>
    <property type="resolution" value="3.34 A"/>
    <property type="chains" value="I=1-128"/>
</dbReference>
<dbReference type="PDB" id="4LF5">
    <property type="method" value="X-ray"/>
    <property type="resolution" value="3.75 A"/>
    <property type="chains" value="I=1-128"/>
</dbReference>
<dbReference type="PDB" id="4LF6">
    <property type="method" value="X-ray"/>
    <property type="resolution" value="3.31 A"/>
    <property type="chains" value="I=1-128"/>
</dbReference>
<dbReference type="PDB" id="4LF7">
    <property type="method" value="X-ray"/>
    <property type="resolution" value="3.15 A"/>
    <property type="chains" value="I=1-128"/>
</dbReference>
<dbReference type="PDB" id="4LF8">
    <property type="method" value="X-ray"/>
    <property type="resolution" value="3.15 A"/>
    <property type="chains" value="I=1-128"/>
</dbReference>
<dbReference type="PDB" id="4LF9">
    <property type="method" value="X-ray"/>
    <property type="resolution" value="3.28 A"/>
    <property type="chains" value="I=1-128"/>
</dbReference>
<dbReference type="PDB" id="4LFA">
    <property type="method" value="X-ray"/>
    <property type="resolution" value="3.65 A"/>
    <property type="chains" value="I=1-128"/>
</dbReference>
<dbReference type="PDB" id="4LFB">
    <property type="method" value="X-ray"/>
    <property type="resolution" value="3.01 A"/>
    <property type="chains" value="I=1-128"/>
</dbReference>
<dbReference type="PDB" id="4LFC">
    <property type="method" value="X-ray"/>
    <property type="resolution" value="3.60 A"/>
    <property type="chains" value="I=1-128"/>
</dbReference>
<dbReference type="PDB" id="4LFZ">
    <property type="method" value="X-ray"/>
    <property type="resolution" value="3.92 A"/>
    <property type="chains" value="QI/XI=1-128"/>
</dbReference>
<dbReference type="PDB" id="4LNT">
    <property type="method" value="X-ray"/>
    <property type="resolution" value="2.94 A"/>
    <property type="chains" value="QI/XI=1-128"/>
</dbReference>
<dbReference type="PDB" id="4LSK">
    <property type="method" value="X-ray"/>
    <property type="resolution" value="3.48 A"/>
    <property type="chains" value="QI/XI=1-128"/>
</dbReference>
<dbReference type="PDB" id="4LT8">
    <property type="method" value="X-ray"/>
    <property type="resolution" value="3.14 A"/>
    <property type="chains" value="QI/XI=1-128"/>
</dbReference>
<dbReference type="PDB" id="4NXM">
    <property type="method" value="X-ray"/>
    <property type="resolution" value="3.65 A"/>
    <property type="chains" value="I=1-128"/>
</dbReference>
<dbReference type="PDB" id="4NXN">
    <property type="method" value="X-ray"/>
    <property type="resolution" value="3.54 A"/>
    <property type="chains" value="I=1-128"/>
</dbReference>
<dbReference type="PDB" id="4OX9">
    <property type="method" value="X-ray"/>
    <property type="resolution" value="3.80 A"/>
    <property type="chains" value="I=1-128"/>
</dbReference>
<dbReference type="PDB" id="4P6F">
    <property type="method" value="X-ray"/>
    <property type="resolution" value="3.60 A"/>
    <property type="chains" value="QI/XI=1-128"/>
</dbReference>
<dbReference type="PDB" id="4P70">
    <property type="method" value="X-ray"/>
    <property type="resolution" value="3.68 A"/>
    <property type="chains" value="QI/XI=1-128"/>
</dbReference>
<dbReference type="PDB" id="4TUA">
    <property type="method" value="X-ray"/>
    <property type="resolution" value="3.60 A"/>
    <property type="chains" value="QI/XI=1-128"/>
</dbReference>
<dbReference type="PDB" id="4TUB">
    <property type="method" value="X-ray"/>
    <property type="resolution" value="3.60 A"/>
    <property type="chains" value="QI/XI=1-128"/>
</dbReference>
<dbReference type="PDB" id="4TUC">
    <property type="method" value="X-ray"/>
    <property type="resolution" value="3.60 A"/>
    <property type="chains" value="QI/XI=1-128"/>
</dbReference>
<dbReference type="PDB" id="4TUD">
    <property type="method" value="X-ray"/>
    <property type="resolution" value="3.60 A"/>
    <property type="chains" value="QI/XI=1-128"/>
</dbReference>
<dbReference type="PDB" id="4TUE">
    <property type="method" value="X-ray"/>
    <property type="resolution" value="3.50 A"/>
    <property type="chains" value="QI/XI=1-128"/>
</dbReference>
<dbReference type="PDB" id="4V42">
    <property type="method" value="X-ray"/>
    <property type="resolution" value="5.50 A"/>
    <property type="chains" value="AL=1-128"/>
</dbReference>
<dbReference type="PDB" id="4V49">
    <property type="method" value="X-ray"/>
    <property type="resolution" value="8.70 A"/>
    <property type="chains" value="I=2-128"/>
</dbReference>
<dbReference type="PDB" id="4V4A">
    <property type="method" value="X-ray"/>
    <property type="resolution" value="9.50 A"/>
    <property type="chains" value="I=2-128"/>
</dbReference>
<dbReference type="PDB" id="4V4I">
    <property type="method" value="X-ray"/>
    <property type="resolution" value="3.71 A"/>
    <property type="chains" value="j=1-128"/>
</dbReference>
<dbReference type="PDB" id="4V4P">
    <property type="method" value="X-ray"/>
    <property type="resolution" value="5.50 A"/>
    <property type="chains" value="BL=1-128"/>
</dbReference>
<dbReference type="PDB" id="4V4R">
    <property type="method" value="X-ray"/>
    <property type="resolution" value="5.90 A"/>
    <property type="chains" value="AI=1-128"/>
</dbReference>
<dbReference type="PDB" id="4V4S">
    <property type="method" value="X-ray"/>
    <property type="resolution" value="6.76 A"/>
    <property type="chains" value="AI=1-128"/>
</dbReference>
<dbReference type="PDB" id="4V4T">
    <property type="method" value="X-ray"/>
    <property type="resolution" value="6.46 A"/>
    <property type="chains" value="AI=1-128"/>
</dbReference>
<dbReference type="PDB" id="4V4X">
    <property type="method" value="X-ray"/>
    <property type="resolution" value="5.00 A"/>
    <property type="chains" value="AL=1-128"/>
</dbReference>
<dbReference type="PDB" id="4V4Y">
    <property type="method" value="X-ray"/>
    <property type="resolution" value="5.50 A"/>
    <property type="chains" value="AL=1-128"/>
</dbReference>
<dbReference type="PDB" id="4V4Z">
    <property type="method" value="X-ray"/>
    <property type="resolution" value="4.51 A"/>
    <property type="chains" value="AL=1-128"/>
</dbReference>
<dbReference type="PDB" id="4V5E">
    <property type="method" value="X-ray"/>
    <property type="resolution" value="3.45 A"/>
    <property type="chains" value="AI/CI=1-128"/>
</dbReference>
<dbReference type="PDB" id="4V5F">
    <property type="method" value="X-ray"/>
    <property type="resolution" value="3.60 A"/>
    <property type="chains" value="AI/CI=1-128"/>
</dbReference>
<dbReference type="PDB" id="4V5G">
    <property type="method" value="X-ray"/>
    <property type="resolution" value="3.60 A"/>
    <property type="chains" value="AI/CI=1-128"/>
</dbReference>
<dbReference type="PDB" id="4V5J">
    <property type="method" value="X-ray"/>
    <property type="resolution" value="3.10 A"/>
    <property type="chains" value="AI/CI=1-128"/>
</dbReference>
<dbReference type="PDB" id="4V5K">
    <property type="method" value="X-ray"/>
    <property type="resolution" value="3.20 A"/>
    <property type="chains" value="AI/CI=1-128"/>
</dbReference>
<dbReference type="PDB" id="4V5L">
    <property type="method" value="X-ray"/>
    <property type="resolution" value="3.10 A"/>
    <property type="chains" value="AI=1-128"/>
</dbReference>
<dbReference type="PDB" id="4V5M">
    <property type="method" value="EM"/>
    <property type="resolution" value="7.80 A"/>
    <property type="chains" value="AI=1-128"/>
</dbReference>
<dbReference type="PDB" id="4V5N">
    <property type="method" value="EM"/>
    <property type="resolution" value="7.60 A"/>
    <property type="chains" value="AI=1-128"/>
</dbReference>
<dbReference type="PDB" id="4V5P">
    <property type="method" value="X-ray"/>
    <property type="resolution" value="3.10 A"/>
    <property type="chains" value="AI/CI=1-128"/>
</dbReference>
<dbReference type="PDB" id="4V5Q">
    <property type="method" value="X-ray"/>
    <property type="resolution" value="3.10 A"/>
    <property type="chains" value="AI/CI=1-128"/>
</dbReference>
<dbReference type="PDB" id="4V5R">
    <property type="method" value="X-ray"/>
    <property type="resolution" value="3.10 A"/>
    <property type="chains" value="AI/CI=1-128"/>
</dbReference>
<dbReference type="PDB" id="4V5S">
    <property type="method" value="X-ray"/>
    <property type="resolution" value="3.10 A"/>
    <property type="chains" value="AI/CI=1-128"/>
</dbReference>
<dbReference type="PDB" id="4V68">
    <property type="method" value="EM"/>
    <property type="resolution" value="6.40 A"/>
    <property type="chains" value="AI=2-128"/>
</dbReference>
<dbReference type="PDB" id="4V6A">
    <property type="method" value="X-ray"/>
    <property type="resolution" value="3.10 A"/>
    <property type="chains" value="AI/CI=1-128"/>
</dbReference>
<dbReference type="PDB" id="4V6F">
    <property type="method" value="X-ray"/>
    <property type="resolution" value="3.10 A"/>
    <property type="chains" value="BL/CL=1-128"/>
</dbReference>
<dbReference type="PDB" id="4V6G">
    <property type="method" value="X-ray"/>
    <property type="resolution" value="3.50 A"/>
    <property type="chains" value="AL/CL=1-128"/>
</dbReference>
<dbReference type="PDB" id="4V7J">
    <property type="method" value="X-ray"/>
    <property type="resolution" value="3.30 A"/>
    <property type="chains" value="Ai/Bi=1-128"/>
</dbReference>
<dbReference type="PDB" id="4V7K">
    <property type="method" value="X-ray"/>
    <property type="resolution" value="3.60 A"/>
    <property type="chains" value="Ai/Bi=1-128"/>
</dbReference>
<dbReference type="PDB" id="4V7L">
    <property type="method" value="X-ray"/>
    <property type="resolution" value="3.00 A"/>
    <property type="chains" value="AI/CI=1-128"/>
</dbReference>
<dbReference type="PDB" id="4V7M">
    <property type="method" value="X-ray"/>
    <property type="resolution" value="3.45 A"/>
    <property type="chains" value="AI/CI=1-128"/>
</dbReference>
<dbReference type="PDB" id="4V7W">
    <property type="method" value="X-ray"/>
    <property type="resolution" value="3.00 A"/>
    <property type="chains" value="AI/CI=1-128"/>
</dbReference>
<dbReference type="PDB" id="4V7X">
    <property type="method" value="X-ray"/>
    <property type="resolution" value="3.00 A"/>
    <property type="chains" value="AI/CI=1-128"/>
</dbReference>
<dbReference type="PDB" id="4V7Y">
    <property type="method" value="X-ray"/>
    <property type="resolution" value="3.00 A"/>
    <property type="chains" value="AI/CI=1-128"/>
</dbReference>
<dbReference type="PDB" id="4V7Z">
    <property type="method" value="X-ray"/>
    <property type="resolution" value="3.10 A"/>
    <property type="chains" value="AI/CI=1-128"/>
</dbReference>
<dbReference type="PDB" id="4V87">
    <property type="method" value="X-ray"/>
    <property type="resolution" value="3.10 A"/>
    <property type="chains" value="BL/CL=1-128"/>
</dbReference>
<dbReference type="PDB" id="4V8A">
    <property type="method" value="X-ray"/>
    <property type="resolution" value="3.20 A"/>
    <property type="chains" value="CI/DI=1-128"/>
</dbReference>
<dbReference type="PDB" id="4V8B">
    <property type="method" value="X-ray"/>
    <property type="resolution" value="3.00 A"/>
    <property type="chains" value="AL/CL=1-128"/>
</dbReference>
<dbReference type="PDB" id="4V8C">
    <property type="method" value="X-ray"/>
    <property type="resolution" value="3.30 A"/>
    <property type="chains" value="CL/DL=1-128"/>
</dbReference>
<dbReference type="PDB" id="4V8D">
    <property type="method" value="X-ray"/>
    <property type="resolution" value="3.00 A"/>
    <property type="chains" value="AL/CL=1-128"/>
</dbReference>
<dbReference type="PDB" id="4V8E">
    <property type="method" value="X-ray"/>
    <property type="resolution" value="3.30 A"/>
    <property type="chains" value="BL/DL=1-128"/>
</dbReference>
<dbReference type="PDB" id="4V8F">
    <property type="method" value="X-ray"/>
    <property type="resolution" value="3.30 A"/>
    <property type="chains" value="BL/CL=1-128"/>
</dbReference>
<dbReference type="PDB" id="4V8G">
    <property type="method" value="X-ray"/>
    <property type="resolution" value="3.00 A"/>
    <property type="chains" value="AI/CI=1-128"/>
</dbReference>
<dbReference type="PDB" id="4V8H">
    <property type="method" value="X-ray"/>
    <property type="resolution" value="3.10 A"/>
    <property type="chains" value="AI/CI=1-128"/>
</dbReference>
<dbReference type="PDB" id="4V8I">
    <property type="method" value="X-ray"/>
    <property type="resolution" value="2.70 A"/>
    <property type="chains" value="AI/CI=1-128"/>
</dbReference>
<dbReference type="PDB" id="4V8J">
    <property type="method" value="X-ray"/>
    <property type="resolution" value="3.90 A"/>
    <property type="chains" value="AI/CI=1-128"/>
</dbReference>
<dbReference type="PDB" id="4V8N">
    <property type="method" value="X-ray"/>
    <property type="resolution" value="3.10 A"/>
    <property type="chains" value="AI/CI=1-128"/>
</dbReference>
<dbReference type="PDB" id="4V8O">
    <property type="method" value="X-ray"/>
    <property type="resolution" value="3.80 A"/>
    <property type="chains" value="AI=1-128"/>
</dbReference>
<dbReference type="PDB" id="4V8Q">
    <property type="method" value="X-ray"/>
    <property type="resolution" value="3.10 A"/>
    <property type="chains" value="BI=1-128"/>
</dbReference>
<dbReference type="PDB" id="4V8U">
    <property type="method" value="X-ray"/>
    <property type="resolution" value="3.70 A"/>
    <property type="chains" value="AI/CI=1-128"/>
</dbReference>
<dbReference type="PDB" id="4V8X">
    <property type="method" value="X-ray"/>
    <property type="resolution" value="3.35 A"/>
    <property type="chains" value="AI/CI=1-128"/>
</dbReference>
<dbReference type="PDB" id="4V90">
    <property type="method" value="X-ray"/>
    <property type="resolution" value="2.95 A"/>
    <property type="chains" value="AI=1-128"/>
</dbReference>
<dbReference type="PDB" id="4V95">
    <property type="method" value="X-ray"/>
    <property type="resolution" value="3.20 A"/>
    <property type="chains" value="AI/CI=1-128"/>
</dbReference>
<dbReference type="PDB" id="4V97">
    <property type="method" value="X-ray"/>
    <property type="resolution" value="3.52 A"/>
    <property type="chains" value="AI/CI=1-128"/>
</dbReference>
<dbReference type="PDB" id="4V9A">
    <property type="method" value="X-ray"/>
    <property type="resolution" value="3.30 A"/>
    <property type="chains" value="AL/CL=1-128"/>
</dbReference>
<dbReference type="PDB" id="4V9B">
    <property type="method" value="X-ray"/>
    <property type="resolution" value="3.10 A"/>
    <property type="chains" value="AL/CL=1-128"/>
</dbReference>
<dbReference type="PDB" id="4V9H">
    <property type="method" value="X-ray"/>
    <property type="resolution" value="2.86 A"/>
    <property type="chains" value="AI=2-128"/>
</dbReference>
<dbReference type="PDB" id="4V9I">
    <property type="method" value="X-ray"/>
    <property type="resolution" value="3.30 A"/>
    <property type="chains" value="AI/CI=2-128"/>
</dbReference>
<dbReference type="PDB" id="4V9R">
    <property type="method" value="X-ray"/>
    <property type="resolution" value="3.00 A"/>
    <property type="chains" value="AI/CI=1-128"/>
</dbReference>
<dbReference type="PDB" id="4V9S">
    <property type="method" value="X-ray"/>
    <property type="resolution" value="3.10 A"/>
    <property type="chains" value="AI/CI=1-128"/>
</dbReference>
<dbReference type="PDB" id="4W2E">
    <property type="method" value="X-ray"/>
    <property type="resolution" value="2.90 A"/>
    <property type="chains" value="i=1-128"/>
</dbReference>
<dbReference type="PDB" id="4W2F">
    <property type="method" value="X-ray"/>
    <property type="resolution" value="2.40 A"/>
    <property type="chains" value="AI/CI=1-128"/>
</dbReference>
<dbReference type="PDB" id="4W2G">
    <property type="method" value="X-ray"/>
    <property type="resolution" value="2.55 A"/>
    <property type="chains" value="AI/CI=1-128"/>
</dbReference>
<dbReference type="PDB" id="4W2H">
    <property type="method" value="X-ray"/>
    <property type="resolution" value="2.70 A"/>
    <property type="chains" value="AI/CI=1-128"/>
</dbReference>
<dbReference type="PDB" id="4W2I">
    <property type="method" value="X-ray"/>
    <property type="resolution" value="2.70 A"/>
    <property type="chains" value="AI/CI=1-128"/>
</dbReference>
<dbReference type="PDB" id="4W4G">
    <property type="method" value="X-ray"/>
    <property type="resolution" value="3.30 A"/>
    <property type="chains" value="QI/XI=1-128"/>
</dbReference>
<dbReference type="PDB" id="4WPO">
    <property type="method" value="X-ray"/>
    <property type="resolution" value="2.80 A"/>
    <property type="chains" value="BI/DI=1-128"/>
</dbReference>
<dbReference type="PDB" id="4WQ1">
    <property type="method" value="X-ray"/>
    <property type="resolution" value="3.10 A"/>
    <property type="chains" value="82/8E=1-128"/>
</dbReference>
<dbReference type="PDB" id="4WQF">
    <property type="method" value="X-ray"/>
    <property type="resolution" value="2.80 A"/>
    <property type="chains" value="BI/DI=1-128"/>
</dbReference>
<dbReference type="PDB" id="4WQR">
    <property type="method" value="X-ray"/>
    <property type="resolution" value="3.15 A"/>
    <property type="chains" value="82/8E=1-128"/>
</dbReference>
<dbReference type="PDB" id="4WQU">
    <property type="method" value="X-ray"/>
    <property type="resolution" value="2.80 A"/>
    <property type="chains" value="BI/DI=1-128"/>
</dbReference>
<dbReference type="PDB" id="4WQY">
    <property type="method" value="X-ray"/>
    <property type="resolution" value="2.80 A"/>
    <property type="chains" value="BI/DI=1-128"/>
</dbReference>
<dbReference type="PDB" id="4WR6">
    <property type="method" value="X-ray"/>
    <property type="resolution" value="3.05 A"/>
    <property type="chains" value="82/8E=1-128"/>
</dbReference>
<dbReference type="PDB" id="4WRA">
    <property type="method" value="X-ray"/>
    <property type="resolution" value="3.05 A"/>
    <property type="chains" value="82/8E=1-128"/>
</dbReference>
<dbReference type="PDB" id="4WRO">
    <property type="method" value="X-ray"/>
    <property type="resolution" value="3.05 A"/>
    <property type="chains" value="8E=1-128"/>
</dbReference>
<dbReference type="PDB" id="4WSD">
    <property type="method" value="X-ray"/>
    <property type="resolution" value="2.95 A"/>
    <property type="chains" value="82/8E=1-128"/>
</dbReference>
<dbReference type="PDB" id="4WSM">
    <property type="method" value="X-ray"/>
    <property type="resolution" value="3.30 A"/>
    <property type="chains" value="82/8E=1-128"/>
</dbReference>
<dbReference type="PDB" id="4WT1">
    <property type="method" value="X-ray"/>
    <property type="resolution" value="3.05 A"/>
    <property type="chains" value="82/8E=1-128"/>
</dbReference>
<dbReference type="PDB" id="4WT8">
    <property type="method" value="X-ray"/>
    <property type="resolution" value="3.40 A"/>
    <property type="chains" value="AI/BI=2-128"/>
</dbReference>
<dbReference type="PDB" id="4WU1">
    <property type="method" value="X-ray"/>
    <property type="resolution" value="3.20 A"/>
    <property type="chains" value="82/8E=1-128"/>
</dbReference>
<dbReference type="PDB" id="4WZD">
    <property type="method" value="X-ray"/>
    <property type="resolution" value="3.10 A"/>
    <property type="chains" value="82/8E=1-128"/>
</dbReference>
<dbReference type="PDB" id="4WZO">
    <property type="method" value="X-ray"/>
    <property type="resolution" value="3.30 A"/>
    <property type="chains" value="82/8E=1-128"/>
</dbReference>
<dbReference type="PDB" id="4X62">
    <property type="method" value="X-ray"/>
    <property type="resolution" value="3.45 A"/>
    <property type="chains" value="I=2-128"/>
</dbReference>
<dbReference type="PDB" id="4X64">
    <property type="method" value="X-ray"/>
    <property type="resolution" value="3.35 A"/>
    <property type="chains" value="I=2-128"/>
</dbReference>
<dbReference type="PDB" id="4X65">
    <property type="method" value="X-ray"/>
    <property type="resolution" value="3.35 A"/>
    <property type="chains" value="I=2-128"/>
</dbReference>
<dbReference type="PDB" id="4X66">
    <property type="method" value="X-ray"/>
    <property type="resolution" value="3.45 A"/>
    <property type="chains" value="I=2-128"/>
</dbReference>
<dbReference type="PDB" id="4Y4O">
    <property type="method" value="X-ray"/>
    <property type="resolution" value="2.30 A"/>
    <property type="chains" value="1i/2i=1-128"/>
</dbReference>
<dbReference type="PDB" id="4Y4P">
    <property type="method" value="X-ray"/>
    <property type="resolution" value="2.50 A"/>
    <property type="chains" value="1i/2i=1-128"/>
</dbReference>
<dbReference type="PDB" id="4YHH">
    <property type="method" value="X-ray"/>
    <property type="resolution" value="3.42 A"/>
    <property type="chains" value="I=2-128"/>
</dbReference>
<dbReference type="PDB" id="4YPB">
    <property type="method" value="X-ray"/>
    <property type="resolution" value="3.40 A"/>
    <property type="chains" value="QI/XI=1-128"/>
</dbReference>
<dbReference type="PDB" id="4YY3">
    <property type="method" value="X-ray"/>
    <property type="resolution" value="3.60 A"/>
    <property type="chains" value="I=1-128"/>
</dbReference>
<dbReference type="PDB" id="4YZV">
    <property type="method" value="X-ray"/>
    <property type="resolution" value="3.10 A"/>
    <property type="chains" value="QI/XI=1-128"/>
</dbReference>
<dbReference type="PDB" id="4Z3S">
    <property type="method" value="X-ray"/>
    <property type="resolution" value="2.65 A"/>
    <property type="chains" value="1i/2i=1-128"/>
</dbReference>
<dbReference type="PDB" id="4Z8C">
    <property type="method" value="X-ray"/>
    <property type="resolution" value="2.90 A"/>
    <property type="chains" value="1i/2i=1-128"/>
</dbReference>
<dbReference type="PDB" id="4ZER">
    <property type="method" value="X-ray"/>
    <property type="resolution" value="3.10 A"/>
    <property type="chains" value="1i/2i=2-128"/>
</dbReference>
<dbReference type="PDB" id="4ZSN">
    <property type="method" value="X-ray"/>
    <property type="resolution" value="3.60 A"/>
    <property type="chains" value="QI/XI=1-128"/>
</dbReference>
<dbReference type="PDB" id="5A9Z">
    <property type="method" value="EM"/>
    <property type="resolution" value="4.70 A"/>
    <property type="chains" value="BM=2-128"/>
</dbReference>
<dbReference type="PDB" id="5AA0">
    <property type="method" value="EM"/>
    <property type="resolution" value="5.00 A"/>
    <property type="chains" value="BM=2-128"/>
</dbReference>
<dbReference type="PDB" id="5BR8">
    <property type="method" value="X-ray"/>
    <property type="resolution" value="3.40 A"/>
    <property type="chains" value="I=1-128"/>
</dbReference>
<dbReference type="PDB" id="5CZP">
    <property type="method" value="X-ray"/>
    <property type="resolution" value="3.30 A"/>
    <property type="chains" value="QI/XI=1-128"/>
</dbReference>
<dbReference type="PDB" id="5D8B">
    <property type="method" value="X-ray"/>
    <property type="resolution" value="3.63 A"/>
    <property type="chains" value="FC/JA=1-128"/>
</dbReference>
<dbReference type="PDB" id="5DFE">
    <property type="method" value="X-ray"/>
    <property type="resolution" value="3.10 A"/>
    <property type="chains" value="QI/XI=1-128"/>
</dbReference>
<dbReference type="PDB" id="5DOX">
    <property type="method" value="X-ray"/>
    <property type="resolution" value="3.10 A"/>
    <property type="chains" value="1i/2i=1-128"/>
</dbReference>
<dbReference type="PDB" id="5DOY">
    <property type="method" value="X-ray"/>
    <property type="resolution" value="2.60 A"/>
    <property type="chains" value="1i/2i=1-128"/>
</dbReference>
<dbReference type="PDB" id="5E7K">
    <property type="method" value="X-ray"/>
    <property type="resolution" value="3.20 A"/>
    <property type="chains" value="82/8E=1-128"/>
</dbReference>
<dbReference type="PDB" id="5E81">
    <property type="method" value="X-ray"/>
    <property type="resolution" value="2.95 A"/>
    <property type="chains" value="82/8E=1-128"/>
</dbReference>
<dbReference type="PDB" id="5EL4">
    <property type="method" value="X-ray"/>
    <property type="resolution" value="3.15 A"/>
    <property type="chains" value="82/8E=1-128"/>
</dbReference>
<dbReference type="PDB" id="5EL5">
    <property type="method" value="X-ray"/>
    <property type="resolution" value="3.15 A"/>
    <property type="chains" value="82/8E=1-128"/>
</dbReference>
<dbReference type="PDB" id="5EL6">
    <property type="method" value="X-ray"/>
    <property type="resolution" value="3.10 A"/>
    <property type="chains" value="82/8E=1-128"/>
</dbReference>
<dbReference type="PDB" id="5EL7">
    <property type="method" value="X-ray"/>
    <property type="resolution" value="3.15 A"/>
    <property type="chains" value="82/8E=1-128"/>
</dbReference>
<dbReference type="PDB" id="5F8K">
    <property type="method" value="X-ray"/>
    <property type="resolution" value="2.80 A"/>
    <property type="chains" value="1i/2i=2-128"/>
</dbReference>
<dbReference type="PDB" id="5FDU">
    <property type="method" value="X-ray"/>
    <property type="resolution" value="2.90 A"/>
    <property type="chains" value="1i/2i=2-128"/>
</dbReference>
<dbReference type="PDB" id="5FDV">
    <property type="method" value="X-ray"/>
    <property type="resolution" value="2.80 A"/>
    <property type="chains" value="1i/2i=2-128"/>
</dbReference>
<dbReference type="PDB" id="5HAU">
    <property type="method" value="X-ray"/>
    <property type="resolution" value="3.00 A"/>
    <property type="chains" value="1i/2i=1-128"/>
</dbReference>
<dbReference type="PDB" id="5HCP">
    <property type="method" value="X-ray"/>
    <property type="resolution" value="2.89 A"/>
    <property type="chains" value="1i/2i=1-128"/>
</dbReference>
<dbReference type="PDB" id="5HCQ">
    <property type="method" value="X-ray"/>
    <property type="resolution" value="2.80 A"/>
    <property type="chains" value="1i/2i=1-128"/>
</dbReference>
<dbReference type="PDB" id="5HCR">
    <property type="method" value="X-ray"/>
    <property type="resolution" value="2.80 A"/>
    <property type="chains" value="1i/2i=1-128"/>
</dbReference>
<dbReference type="PDB" id="5HD1">
    <property type="method" value="X-ray"/>
    <property type="resolution" value="2.70 A"/>
    <property type="chains" value="1i/2i=1-128"/>
</dbReference>
<dbReference type="PDB" id="5IB7">
    <property type="method" value="X-ray"/>
    <property type="resolution" value="2.99 A"/>
    <property type="chains" value="82/8E=1-128"/>
</dbReference>
<dbReference type="PDB" id="5IB8">
    <property type="method" value="X-ray"/>
    <property type="resolution" value="3.13 A"/>
    <property type="chains" value="82/8E=1-128"/>
</dbReference>
<dbReference type="PDB" id="5IBB">
    <property type="method" value="X-ray"/>
    <property type="resolution" value="2.96 A"/>
    <property type="chains" value="82/8E=1-128"/>
</dbReference>
<dbReference type="PDB" id="5IMQ">
    <property type="method" value="EM"/>
    <property type="resolution" value="3.80 A"/>
    <property type="chains" value="M=1-128"/>
</dbReference>
<dbReference type="PDB" id="5IMR">
    <property type="method" value="EM"/>
    <property type="chains" value="M=1-128"/>
</dbReference>
<dbReference type="PDB" id="5IWA">
    <property type="method" value="X-ray"/>
    <property type="resolution" value="3.50 A"/>
    <property type="chains" value="I=2-128"/>
</dbReference>
<dbReference type="PDB" id="5J30">
    <property type="method" value="X-ray"/>
    <property type="resolution" value="3.20 A"/>
    <property type="chains" value="QI/XI=1-128"/>
</dbReference>
<dbReference type="PDB" id="5J3C">
    <property type="method" value="X-ray"/>
    <property type="resolution" value="3.04 A"/>
    <property type="chains" value="QI/XI=1-128"/>
</dbReference>
<dbReference type="PDB" id="5J4B">
    <property type="method" value="X-ray"/>
    <property type="resolution" value="2.60 A"/>
    <property type="chains" value="1i/2i=1-128"/>
</dbReference>
<dbReference type="PDB" id="5J4C">
    <property type="method" value="X-ray"/>
    <property type="resolution" value="2.80 A"/>
    <property type="chains" value="1i/2i=1-128"/>
</dbReference>
<dbReference type="PDB" id="5J8B">
    <property type="method" value="X-ray"/>
    <property type="resolution" value="2.60 A"/>
    <property type="chains" value="i=1-128"/>
</dbReference>
<dbReference type="PDB" id="5LMN">
    <property type="method" value="EM"/>
    <property type="resolution" value="3.55 A"/>
    <property type="chains" value="I=1-128"/>
</dbReference>
<dbReference type="PDB" id="5LMO">
    <property type="method" value="EM"/>
    <property type="resolution" value="4.30 A"/>
    <property type="chains" value="I=1-128"/>
</dbReference>
<dbReference type="PDB" id="5LMP">
    <property type="method" value="EM"/>
    <property type="resolution" value="5.35 A"/>
    <property type="chains" value="I=1-128"/>
</dbReference>
<dbReference type="PDB" id="5LMQ">
    <property type="method" value="EM"/>
    <property type="resolution" value="4.20 A"/>
    <property type="chains" value="I=1-128"/>
</dbReference>
<dbReference type="PDB" id="5LMR">
    <property type="method" value="EM"/>
    <property type="resolution" value="4.45 A"/>
    <property type="chains" value="I=1-128"/>
</dbReference>
<dbReference type="PDB" id="5LMS">
    <property type="method" value="EM"/>
    <property type="resolution" value="5.10 A"/>
    <property type="chains" value="I=1-128"/>
</dbReference>
<dbReference type="PDB" id="5LMT">
    <property type="method" value="EM"/>
    <property type="resolution" value="4.15 A"/>
    <property type="chains" value="I=1-128"/>
</dbReference>
<dbReference type="PDB" id="5LMU">
    <property type="method" value="EM"/>
    <property type="resolution" value="4.00 A"/>
    <property type="chains" value="I=1-128"/>
</dbReference>
<dbReference type="PDB" id="5LMV">
    <property type="method" value="EM"/>
    <property type="resolution" value="4.90 A"/>
    <property type="chains" value="I=1-128"/>
</dbReference>
<dbReference type="PDB" id="5NDJ">
    <property type="method" value="X-ray"/>
    <property type="resolution" value="3.15 A"/>
    <property type="chains" value="82/8E=1-128"/>
</dbReference>
<dbReference type="PDB" id="5NDK">
    <property type="method" value="X-ray"/>
    <property type="resolution" value="2.95 A"/>
    <property type="chains" value="82/8E=1-128"/>
</dbReference>
<dbReference type="PDB" id="5OT7">
    <property type="method" value="EM"/>
    <property type="resolution" value="3.80 A"/>
    <property type="chains" value="H=2-128"/>
</dbReference>
<dbReference type="PDB" id="5UQ7">
    <property type="method" value="EM"/>
    <property type="resolution" value="3.50 A"/>
    <property type="chains" value="i=2-127"/>
</dbReference>
<dbReference type="PDB" id="5UQ8">
    <property type="method" value="EM"/>
    <property type="resolution" value="3.20 A"/>
    <property type="chains" value="i=2-127"/>
</dbReference>
<dbReference type="PDB" id="5VP2">
    <property type="method" value="X-ray"/>
    <property type="resolution" value="2.80 A"/>
    <property type="chains" value="1i/2i=1-128"/>
</dbReference>
<dbReference type="PDB" id="5VPO">
    <property type="method" value="X-ray"/>
    <property type="resolution" value="3.34 A"/>
    <property type="chains" value="QI/XI=1-128"/>
</dbReference>
<dbReference type="PDB" id="5VPP">
    <property type="method" value="X-ray"/>
    <property type="resolution" value="3.90 A"/>
    <property type="chains" value="QI/XI=1-128"/>
</dbReference>
<dbReference type="PDB" id="5W4K">
    <property type="method" value="X-ray"/>
    <property type="resolution" value="2.70 A"/>
    <property type="chains" value="1i/2i=1-128"/>
</dbReference>
<dbReference type="PDB" id="5WIS">
    <property type="method" value="X-ray"/>
    <property type="resolution" value="2.70 A"/>
    <property type="chains" value="1i/2i=1-128"/>
</dbReference>
<dbReference type="PDB" id="5WIT">
    <property type="method" value="X-ray"/>
    <property type="resolution" value="2.60 A"/>
    <property type="chains" value="1i/2i=1-128"/>
</dbReference>
<dbReference type="PDB" id="5WNP">
    <property type="method" value="X-ray"/>
    <property type="resolution" value="3.30 A"/>
    <property type="chains" value="I=2-128"/>
</dbReference>
<dbReference type="PDB" id="5WNQ">
    <property type="method" value="X-ray"/>
    <property type="resolution" value="3.50 A"/>
    <property type="chains" value="I=2-128"/>
</dbReference>
<dbReference type="PDB" id="5WNR">
    <property type="method" value="X-ray"/>
    <property type="resolution" value="3.50 A"/>
    <property type="chains" value="I=2-128"/>
</dbReference>
<dbReference type="PDB" id="5WNS">
    <property type="method" value="X-ray"/>
    <property type="resolution" value="3.50 A"/>
    <property type="chains" value="I=2-128"/>
</dbReference>
<dbReference type="PDB" id="5WNT">
    <property type="method" value="X-ray"/>
    <property type="resolution" value="3.30 A"/>
    <property type="chains" value="I=2-128"/>
</dbReference>
<dbReference type="PDB" id="5WNU">
    <property type="method" value="X-ray"/>
    <property type="resolution" value="3.40 A"/>
    <property type="chains" value="I=2-128"/>
</dbReference>
<dbReference type="PDB" id="5WNV">
    <property type="method" value="X-ray"/>
    <property type="resolution" value="3.30 A"/>
    <property type="chains" value="I=2-128"/>
</dbReference>
<dbReference type="PDB" id="5ZLU">
    <property type="method" value="EM"/>
    <property type="resolution" value="3.60 A"/>
    <property type="chains" value="O=1-128"/>
</dbReference>
<dbReference type="PDB" id="6BUW">
    <property type="method" value="X-ray"/>
    <property type="resolution" value="3.50 A"/>
    <property type="chains" value="QI/XI=1-128"/>
</dbReference>
<dbReference type="PDB" id="6BZ6">
    <property type="method" value="X-ray"/>
    <property type="resolution" value="3.18 A"/>
    <property type="chains" value="QI/XI=1-128"/>
</dbReference>
<dbReference type="PDB" id="6BZ7">
    <property type="method" value="X-ray"/>
    <property type="resolution" value="3.68 A"/>
    <property type="chains" value="QI/XI=1-128"/>
</dbReference>
<dbReference type="PDB" id="6BZ8">
    <property type="method" value="X-ray"/>
    <property type="resolution" value="3.74 A"/>
    <property type="chains" value="QI/XI=1-128"/>
</dbReference>
<dbReference type="PDB" id="6C5L">
    <property type="method" value="X-ray"/>
    <property type="resolution" value="3.20 A"/>
    <property type="chains" value="AI/CI=1-128"/>
</dbReference>
<dbReference type="PDB" id="6CAE">
    <property type="method" value="X-ray"/>
    <property type="resolution" value="2.60 A"/>
    <property type="chains" value="1i/2i=1-128"/>
</dbReference>
<dbReference type="PDB" id="6CAO">
    <property type="method" value="X-ray"/>
    <property type="resolution" value="3.45 A"/>
    <property type="chains" value="I=2-128"/>
</dbReference>
<dbReference type="PDB" id="6CAP">
    <property type="method" value="X-ray"/>
    <property type="resolution" value="3.40 A"/>
    <property type="chains" value="I=2-128"/>
</dbReference>
<dbReference type="PDB" id="6CAQ">
    <property type="method" value="X-ray"/>
    <property type="resolution" value="3.40 A"/>
    <property type="chains" value="I=2-128"/>
</dbReference>
<dbReference type="PDB" id="6CAR">
    <property type="method" value="X-ray"/>
    <property type="resolution" value="3.40 A"/>
    <property type="chains" value="I=2-128"/>
</dbReference>
<dbReference type="PDB" id="6CAS">
    <property type="method" value="X-ray"/>
    <property type="resolution" value="3.50 A"/>
    <property type="chains" value="I=2-128"/>
</dbReference>
<dbReference type="PDB" id="6CFJ">
    <property type="method" value="X-ray"/>
    <property type="resolution" value="2.80 A"/>
    <property type="chains" value="1i/2i=1-128"/>
</dbReference>
<dbReference type="PDB" id="6CFK">
    <property type="method" value="X-ray"/>
    <property type="resolution" value="2.70 A"/>
    <property type="chains" value="1i/2i=1-128"/>
</dbReference>
<dbReference type="PDB" id="6CFL">
    <property type="method" value="X-ray"/>
    <property type="resolution" value="2.60 A"/>
    <property type="chains" value="1i/2i=1-128"/>
</dbReference>
<dbReference type="PDB" id="6CZR">
    <property type="method" value="X-ray"/>
    <property type="resolution" value="3.14 A"/>
    <property type="chains" value="1i/2i=2-128"/>
</dbReference>
<dbReference type="PDB" id="6DTI">
    <property type="method" value="X-ray"/>
    <property type="resolution" value="3.54 A"/>
    <property type="chains" value="I=1-128"/>
</dbReference>
<dbReference type="PDB" id="6FKR">
    <property type="method" value="X-ray"/>
    <property type="resolution" value="3.20 A"/>
    <property type="chains" value="1i/2i=2-128"/>
</dbReference>
<dbReference type="PDB" id="6GSJ">
    <property type="method" value="X-ray"/>
    <property type="resolution" value="2.96 A"/>
    <property type="chains" value="82/8E=1-128"/>
</dbReference>
<dbReference type="PDB" id="6GSK">
    <property type="method" value="X-ray"/>
    <property type="resolution" value="3.36 A"/>
    <property type="chains" value="82/8E=1-128"/>
</dbReference>
<dbReference type="PDB" id="6GSL">
    <property type="method" value="X-ray"/>
    <property type="resolution" value="3.16 A"/>
    <property type="chains" value="82/8E=1-128"/>
</dbReference>
<dbReference type="PDB" id="6GZQ">
    <property type="method" value="EM"/>
    <property type="resolution" value="3.28 A"/>
    <property type="chains" value="I2=2-128"/>
</dbReference>
<dbReference type="PDB" id="6GZX">
    <property type="method" value="EM"/>
    <property type="resolution" value="4.57 A"/>
    <property type="chains" value="I3/I4=2-128"/>
</dbReference>
<dbReference type="PDB" id="6GZZ">
    <property type="method" value="EM"/>
    <property type="resolution" value="4.13 A"/>
    <property type="chains" value="I3/I4=2-128"/>
</dbReference>
<dbReference type="PDB" id="6MKN">
    <property type="method" value="X-ray"/>
    <property type="resolution" value="3.46 A"/>
    <property type="chains" value="I=1-128"/>
</dbReference>
<dbReference type="PDB" id="6MPF">
    <property type="method" value="X-ray"/>
    <property type="resolution" value="3.33 A"/>
    <property type="chains" value="I=2-128"/>
</dbReference>
<dbReference type="PDB" id="6MPI">
    <property type="method" value="X-ray"/>
    <property type="resolution" value="3.33 A"/>
    <property type="chains" value="I=1-128"/>
</dbReference>
<dbReference type="PDB" id="6N9E">
    <property type="method" value="X-ray"/>
    <property type="resolution" value="3.70 A"/>
    <property type="chains" value="1i/2i=1-128"/>
</dbReference>
<dbReference type="PDB" id="6N9F">
    <property type="method" value="X-ray"/>
    <property type="resolution" value="3.70 A"/>
    <property type="chains" value="1i/2i=1-128"/>
</dbReference>
<dbReference type="PDB" id="6ND5">
    <property type="method" value="X-ray"/>
    <property type="resolution" value="2.60 A"/>
    <property type="chains" value="1i/2i=1-128"/>
</dbReference>
<dbReference type="PDB" id="6ND6">
    <property type="method" value="X-ray"/>
    <property type="resolution" value="2.85 A"/>
    <property type="chains" value="1i/2i=1-128"/>
</dbReference>
<dbReference type="PDB" id="6NDK">
    <property type="method" value="X-ray"/>
    <property type="resolution" value="3.64 A"/>
    <property type="chains" value="QI/XI=1-128"/>
</dbReference>
<dbReference type="PDB" id="6NSH">
    <property type="method" value="X-ray"/>
    <property type="resolution" value="3.40 A"/>
    <property type="chains" value="QI/XI=1-128"/>
</dbReference>
<dbReference type="PDB" id="6NTA">
    <property type="method" value="X-ray"/>
    <property type="resolution" value="3.10 A"/>
    <property type="chains" value="QI/XI=1-128"/>
</dbReference>
<dbReference type="PDB" id="6NUO">
    <property type="method" value="X-ray"/>
    <property type="resolution" value="3.20 A"/>
    <property type="chains" value="QI/XI=1-128"/>
</dbReference>
<dbReference type="PDB" id="6NWY">
    <property type="method" value="X-ray"/>
    <property type="resolution" value="3.50 A"/>
    <property type="chains" value="QI/XI=1-128"/>
</dbReference>
<dbReference type="PDB" id="6NY6">
    <property type="method" value="X-ray"/>
    <property type="resolution" value="3.74 A"/>
    <property type="chains" value="I=1-128"/>
</dbReference>
<dbReference type="PDB" id="6O3M">
    <property type="method" value="X-ray"/>
    <property type="resolution" value="3.97 A"/>
    <property type="chains" value="QI/XI=1-128"/>
</dbReference>
<dbReference type="PDB" id="6O97">
    <property type="method" value="X-ray"/>
    <property type="resolution" value="2.75 A"/>
    <property type="chains" value="1i/2i=1-128"/>
</dbReference>
<dbReference type="PDB" id="6OF1">
    <property type="method" value="X-ray"/>
    <property type="resolution" value="2.80 A"/>
    <property type="chains" value="1i/2i=1-128"/>
</dbReference>
<dbReference type="PDB" id="6OF6">
    <property type="method" value="X-ray"/>
    <property type="resolution" value="3.20 A"/>
    <property type="chains" value="QI/XI=1-128"/>
</dbReference>
<dbReference type="PDB" id="6OJ2">
    <property type="method" value="X-ray"/>
    <property type="resolution" value="3.20 A"/>
    <property type="chains" value="QI/XI=1-128"/>
</dbReference>
<dbReference type="PDB" id="6OPE">
    <property type="method" value="X-ray"/>
    <property type="resolution" value="3.10 A"/>
    <property type="chains" value="QI/XI=1-128"/>
</dbReference>
<dbReference type="PDB" id="6ORD">
    <property type="method" value="X-ray"/>
    <property type="resolution" value="3.10 A"/>
    <property type="chains" value="QI/XI=1-128"/>
</dbReference>
<dbReference type="PDB" id="6OSI">
    <property type="method" value="X-ray"/>
    <property type="resolution" value="4.14 A"/>
    <property type="chains" value="QI/XI=1-128"/>
</dbReference>
<dbReference type="PDB" id="6OTR">
    <property type="method" value="X-ray"/>
    <property type="resolution" value="3.12 A"/>
    <property type="chains" value="QI/XI=1-128"/>
</dbReference>
<dbReference type="PDB" id="6OXA">
    <property type="method" value="X-ray"/>
    <property type="resolution" value="3.25 A"/>
    <property type="chains" value="QI/XI=1-128"/>
</dbReference>
<dbReference type="PDB" id="6OXI">
    <property type="method" value="X-ray"/>
    <property type="resolution" value="3.50 A"/>
    <property type="chains" value="QI/XI=1-128"/>
</dbReference>
<dbReference type="PDB" id="6Q95">
    <property type="method" value="EM"/>
    <property type="resolution" value="3.70 A"/>
    <property type="chains" value="n=2-128"/>
</dbReference>
<dbReference type="PDB" id="6QNQ">
    <property type="method" value="X-ray"/>
    <property type="resolution" value="3.50 A"/>
    <property type="chains" value="82/8E=1-128"/>
</dbReference>
<dbReference type="PDB" id="6QNR">
    <property type="method" value="X-ray"/>
    <property type="resolution" value="3.10 A"/>
    <property type="chains" value="82/8E=1-128"/>
</dbReference>
<dbReference type="PDB" id="6UCQ">
    <property type="method" value="X-ray"/>
    <property type="resolution" value="3.50 A"/>
    <property type="chains" value="1i/2i=1-128"/>
</dbReference>
<dbReference type="PDB" id="6UO1">
    <property type="method" value="X-ray"/>
    <property type="resolution" value="2.95 A"/>
    <property type="chains" value="1i/2i=1-128"/>
</dbReference>
<dbReference type="PDB" id="6XHV">
    <property type="method" value="X-ray"/>
    <property type="resolution" value="2.40 A"/>
    <property type="chains" value="1i/2i=1-128"/>
</dbReference>
<dbReference type="PDB" id="6XHW">
    <property type="method" value="X-ray"/>
    <property type="resolution" value="2.50 A"/>
    <property type="chains" value="1i/2i=1-128"/>
</dbReference>
<dbReference type="PDB" id="6XHX">
    <property type="method" value="X-ray"/>
    <property type="resolution" value="2.55 A"/>
    <property type="chains" value="1i/2i=1-128"/>
</dbReference>
<dbReference type="PDB" id="6XHY">
    <property type="method" value="X-ray"/>
    <property type="resolution" value="2.60 A"/>
    <property type="chains" value="1i/2i=1-128"/>
</dbReference>
<dbReference type="PDB" id="6XQD">
    <property type="method" value="X-ray"/>
    <property type="resolution" value="2.80 A"/>
    <property type="chains" value="1i/2i=1-128"/>
</dbReference>
<dbReference type="PDB" id="6XQE">
    <property type="method" value="X-ray"/>
    <property type="resolution" value="3.00 A"/>
    <property type="chains" value="1i/2i=1-128"/>
</dbReference>
<dbReference type="PDB" id="7AZO">
    <property type="method" value="X-ray"/>
    <property type="resolution" value="3.30 A"/>
    <property type="chains" value="S9A/S9B=1-128"/>
</dbReference>
<dbReference type="PDB" id="7AZS">
    <property type="method" value="X-ray"/>
    <property type="resolution" value="3.10 A"/>
    <property type="chains" value="S9A/S9B=1-128"/>
</dbReference>
<dbReference type="PDB" id="7DUG">
    <property type="method" value="X-ray"/>
    <property type="resolution" value="3.75 A"/>
    <property type="chains" value="I=1-128"/>
</dbReference>
<dbReference type="PDB" id="7DUH">
    <property type="method" value="X-ray"/>
    <property type="resolution" value="3.75 A"/>
    <property type="chains" value="I=1-128"/>
</dbReference>
<dbReference type="PDB" id="7DUI">
    <property type="method" value="X-ray"/>
    <property type="resolution" value="3.62 A"/>
    <property type="chains" value="I=1-128"/>
</dbReference>
<dbReference type="PDB" id="7DUJ">
    <property type="method" value="X-ray"/>
    <property type="resolution" value="3.75 A"/>
    <property type="chains" value="I=1-128"/>
</dbReference>
<dbReference type="PDB" id="7DUK">
    <property type="method" value="X-ray"/>
    <property type="resolution" value="3.60 A"/>
    <property type="chains" value="I=1-128"/>
</dbReference>
<dbReference type="PDB" id="7DUL">
    <property type="method" value="X-ray"/>
    <property type="resolution" value="3.62 A"/>
    <property type="chains" value="I=1-128"/>
</dbReference>
<dbReference type="PDB" id="7JQL">
    <property type="method" value="X-ray"/>
    <property type="resolution" value="3.00 A"/>
    <property type="chains" value="1i/2i=1-128"/>
</dbReference>
<dbReference type="PDB" id="7JQM">
    <property type="method" value="X-ray"/>
    <property type="resolution" value="3.05 A"/>
    <property type="chains" value="1i/2i=1-128"/>
</dbReference>
<dbReference type="PDB" id="7LH5">
    <property type="method" value="X-ray"/>
    <property type="resolution" value="3.27 A"/>
    <property type="chains" value="AI/CI=1-128"/>
</dbReference>
<dbReference type="PDB" id="7MD7">
    <property type="method" value="X-ray"/>
    <property type="resolution" value="2.80 A"/>
    <property type="chains" value="1i/2i=1-128"/>
</dbReference>
<dbReference type="PDB" id="7RQ8">
    <property type="method" value="X-ray"/>
    <property type="resolution" value="2.50 A"/>
    <property type="chains" value="1i/2i=1-128"/>
</dbReference>
<dbReference type="PDB" id="7RQ9">
    <property type="method" value="X-ray"/>
    <property type="resolution" value="2.60 A"/>
    <property type="chains" value="1i/2i=1-128"/>
</dbReference>
<dbReference type="PDB" id="7RQA">
    <property type="method" value="X-ray"/>
    <property type="resolution" value="2.40 A"/>
    <property type="chains" value="1i/2i=1-128"/>
</dbReference>
<dbReference type="PDB" id="7RQB">
    <property type="method" value="X-ray"/>
    <property type="resolution" value="2.45 A"/>
    <property type="chains" value="1i/2i=1-128"/>
</dbReference>
<dbReference type="PDB" id="7RQC">
    <property type="method" value="X-ray"/>
    <property type="resolution" value="2.50 A"/>
    <property type="chains" value="1i/2i=1-128"/>
</dbReference>
<dbReference type="PDB" id="7RQD">
    <property type="method" value="X-ray"/>
    <property type="resolution" value="2.50 A"/>
    <property type="chains" value="1i/2i=1-128"/>
</dbReference>
<dbReference type="PDB" id="7RQE">
    <property type="method" value="X-ray"/>
    <property type="resolution" value="2.40 A"/>
    <property type="chains" value="1i/2i=1-128"/>
</dbReference>
<dbReference type="PDB" id="7U2H">
    <property type="method" value="X-ray"/>
    <property type="resolution" value="2.55 A"/>
    <property type="chains" value="1i/2i=1-128"/>
</dbReference>
<dbReference type="PDB" id="7U2I">
    <property type="method" value="X-ray"/>
    <property type="resolution" value="2.55 A"/>
    <property type="chains" value="1i/2i=1-128"/>
</dbReference>
<dbReference type="PDB" id="7U2J">
    <property type="method" value="X-ray"/>
    <property type="resolution" value="2.55 A"/>
    <property type="chains" value="1i/2i=1-128"/>
</dbReference>
<dbReference type="PDB" id="7V2L">
    <property type="method" value="EM"/>
    <property type="resolution" value="3.30 A"/>
    <property type="chains" value="I=1-128"/>
</dbReference>
<dbReference type="PDB" id="7V2M">
    <property type="method" value="EM"/>
    <property type="resolution" value="3.40 A"/>
    <property type="chains" value="I=1-128"/>
</dbReference>
<dbReference type="PDB" id="7V2N">
    <property type="method" value="EM"/>
    <property type="resolution" value="3.60 A"/>
    <property type="chains" value="I=1-128"/>
</dbReference>
<dbReference type="PDB" id="7V2O">
    <property type="method" value="EM"/>
    <property type="resolution" value="3.50 A"/>
    <property type="chains" value="I=1-128"/>
</dbReference>
<dbReference type="PDB" id="7V2P">
    <property type="method" value="EM"/>
    <property type="resolution" value="3.30 A"/>
    <property type="chains" value="I=1-128"/>
</dbReference>
<dbReference type="PDB" id="7V2Q">
    <property type="method" value="EM"/>
    <property type="resolution" value="3.24 A"/>
    <property type="chains" value="I=1-128"/>
</dbReference>
<dbReference type="PDB" id="8CVJ">
    <property type="method" value="X-ray"/>
    <property type="resolution" value="2.40 A"/>
    <property type="chains" value="1i/2i=1-128"/>
</dbReference>
<dbReference type="PDB" id="8CVK">
    <property type="method" value="X-ray"/>
    <property type="resolution" value="2.50 A"/>
    <property type="chains" value="1i/2i=1-128"/>
</dbReference>
<dbReference type="PDB" id="8CVL">
    <property type="method" value="X-ray"/>
    <property type="resolution" value="2.30 A"/>
    <property type="chains" value="1i/2i=1-128"/>
</dbReference>
<dbReference type="PDB" id="8EKB">
    <property type="method" value="X-ray"/>
    <property type="resolution" value="2.70 A"/>
    <property type="chains" value="1i/2i=1-128"/>
</dbReference>
<dbReference type="PDB" id="8EV6">
    <property type="method" value="X-ray"/>
    <property type="resolution" value="2.95 A"/>
    <property type="chains" value="1i/2i=1-128"/>
</dbReference>
<dbReference type="PDB" id="8EV7">
    <property type="method" value="X-ray"/>
    <property type="resolution" value="2.89 A"/>
    <property type="chains" value="1i/2i=1-128"/>
</dbReference>
<dbReference type="PDB" id="8FC1">
    <property type="method" value="X-ray"/>
    <property type="resolution" value="2.50 A"/>
    <property type="chains" value="1i/2i=1-128"/>
</dbReference>
<dbReference type="PDB" id="8FC2">
    <property type="method" value="X-ray"/>
    <property type="resolution" value="2.50 A"/>
    <property type="chains" value="1i/2i=1-128"/>
</dbReference>
<dbReference type="PDB" id="8FC3">
    <property type="method" value="X-ray"/>
    <property type="resolution" value="2.60 A"/>
    <property type="chains" value="1i/2i=1-128"/>
</dbReference>
<dbReference type="PDB" id="8FC4">
    <property type="method" value="X-ray"/>
    <property type="resolution" value="2.45 A"/>
    <property type="chains" value="1i/2i=1-128"/>
</dbReference>
<dbReference type="PDB" id="8FC5">
    <property type="method" value="X-ray"/>
    <property type="resolution" value="2.65 A"/>
    <property type="chains" value="1i/2i=1-128"/>
</dbReference>
<dbReference type="PDB" id="8FC6">
    <property type="method" value="X-ray"/>
    <property type="resolution" value="2.35 A"/>
    <property type="chains" value="1i/2i=1-128"/>
</dbReference>
<dbReference type="PDB" id="8FOM">
    <property type="method" value="X-ray"/>
    <property type="resolution" value="3.58 A"/>
    <property type="chains" value="QI/XI=1-128"/>
</dbReference>
<dbReference type="PDB" id="8FON">
    <property type="method" value="X-ray"/>
    <property type="resolution" value="3.64 A"/>
    <property type="chains" value="QI/XI=1-128"/>
</dbReference>
<dbReference type="PDB" id="8G29">
    <property type="method" value="X-ray"/>
    <property type="resolution" value="2.55 A"/>
    <property type="chains" value="1i/2i=1-128"/>
</dbReference>
<dbReference type="PDB" id="8G2A">
    <property type="method" value="X-ray"/>
    <property type="resolution" value="2.45 A"/>
    <property type="chains" value="1i/2i=1-128"/>
</dbReference>
<dbReference type="PDB" id="8G2B">
    <property type="method" value="X-ray"/>
    <property type="resolution" value="2.55 A"/>
    <property type="chains" value="1i/2i=1-128"/>
</dbReference>
<dbReference type="PDB" id="8G2C">
    <property type="method" value="X-ray"/>
    <property type="resolution" value="2.65 A"/>
    <property type="chains" value="1i/2i=1-128"/>
</dbReference>
<dbReference type="PDB" id="8G2D">
    <property type="method" value="X-ray"/>
    <property type="resolution" value="2.70 A"/>
    <property type="chains" value="1i/2i=1-128"/>
</dbReference>
<dbReference type="PDB" id="8T8B">
    <property type="method" value="X-ray"/>
    <property type="resolution" value="2.65 A"/>
    <property type="chains" value="1i/2i=1-128"/>
</dbReference>
<dbReference type="PDB" id="8T8C">
    <property type="method" value="X-ray"/>
    <property type="resolution" value="2.60 A"/>
    <property type="chains" value="1i/2i=1-128"/>
</dbReference>
<dbReference type="PDB" id="8UD6">
    <property type="method" value="X-ray"/>
    <property type="resolution" value="2.70 A"/>
    <property type="chains" value="1i/2i=1-128"/>
</dbReference>
<dbReference type="PDB" id="8UD7">
    <property type="method" value="X-ray"/>
    <property type="resolution" value="2.55 A"/>
    <property type="chains" value="1i/2i=1-128"/>
</dbReference>
<dbReference type="PDB" id="8UD8">
    <property type="method" value="X-ray"/>
    <property type="resolution" value="2.60 A"/>
    <property type="chains" value="1i/2i=1-128"/>
</dbReference>
<dbReference type="PDB" id="8UVR">
    <property type="method" value="X-ray"/>
    <property type="resolution" value="2.60 A"/>
    <property type="chains" value="1i/2i=1-128"/>
</dbReference>
<dbReference type="PDB" id="8UVS">
    <property type="method" value="X-ray"/>
    <property type="resolution" value="2.75 A"/>
    <property type="chains" value="1i/2i=1-128"/>
</dbReference>
<dbReference type="PDB" id="8VTU">
    <property type="method" value="X-ray"/>
    <property type="resolution" value="2.40 A"/>
    <property type="chains" value="1i/2i=1-128"/>
</dbReference>
<dbReference type="PDB" id="8VTV">
    <property type="method" value="X-ray"/>
    <property type="resolution" value="2.55 A"/>
    <property type="chains" value="1i/2i=1-128"/>
</dbReference>
<dbReference type="PDB" id="8VTW">
    <property type="method" value="X-ray"/>
    <property type="resolution" value="2.35 A"/>
    <property type="chains" value="1i/2i=1-128"/>
</dbReference>
<dbReference type="PDB" id="8VTX">
    <property type="method" value="X-ray"/>
    <property type="resolution" value="2.40 A"/>
    <property type="chains" value="1i/2i=1-128"/>
</dbReference>
<dbReference type="PDB" id="8VTY">
    <property type="method" value="X-ray"/>
    <property type="resolution" value="2.60 A"/>
    <property type="chains" value="1i/2i=1-128"/>
</dbReference>
<dbReference type="PDB" id="9B00">
    <property type="method" value="X-ray"/>
    <property type="resolution" value="2.80 A"/>
    <property type="chains" value="1i/2i=1-128"/>
</dbReference>
<dbReference type="PDB" id="9D0J">
    <property type="method" value="X-ray"/>
    <property type="resolution" value="2.50 A"/>
    <property type="chains" value="1i/2i=1-128"/>
</dbReference>
<dbReference type="PDB" id="9D7R">
    <property type="method" value="X-ray"/>
    <property type="resolution" value="2.70 A"/>
    <property type="chains" value="1i/2i=1-128"/>
</dbReference>
<dbReference type="PDB" id="9D7S">
    <property type="method" value="X-ray"/>
    <property type="resolution" value="2.85 A"/>
    <property type="chains" value="1i/2i=1-128"/>
</dbReference>
<dbReference type="PDB" id="9D7T">
    <property type="method" value="X-ray"/>
    <property type="resolution" value="2.70 A"/>
    <property type="chains" value="1i/2i=1-128"/>
</dbReference>
<dbReference type="PDB" id="9DFC">
    <property type="method" value="X-ray"/>
    <property type="resolution" value="2.50 A"/>
    <property type="chains" value="1i/2i=1-128"/>
</dbReference>
<dbReference type="PDB" id="9DFD">
    <property type="method" value="X-ray"/>
    <property type="resolution" value="2.60 A"/>
    <property type="chains" value="1i/2i=1-128"/>
</dbReference>
<dbReference type="PDB" id="9DFE">
    <property type="method" value="X-ray"/>
    <property type="resolution" value="2.60 A"/>
    <property type="chains" value="1i/2i=1-128"/>
</dbReference>
<dbReference type="PDBsum" id="1FJG"/>
<dbReference type="PDBsum" id="1HNW"/>
<dbReference type="PDBsum" id="1HNX"/>
<dbReference type="PDBsum" id="1HNZ"/>
<dbReference type="PDBsum" id="1HR0"/>
<dbReference type="PDBsum" id="1I94"/>
<dbReference type="PDBsum" id="1I95"/>
<dbReference type="PDBsum" id="1I96"/>
<dbReference type="PDBsum" id="1I97"/>
<dbReference type="PDBsum" id="1IBK"/>
<dbReference type="PDBsum" id="1IBL"/>
<dbReference type="PDBsum" id="1IBM"/>
<dbReference type="PDBsum" id="1J5E"/>
<dbReference type="PDBsum" id="1JGO"/>
<dbReference type="PDBsum" id="1JGP"/>
<dbReference type="PDBsum" id="1JGQ"/>
<dbReference type="PDBsum" id="1ML5"/>
<dbReference type="PDBsum" id="1N32"/>
<dbReference type="PDBsum" id="1N33"/>
<dbReference type="PDBsum" id="1N34"/>
<dbReference type="PDBsum" id="1N36"/>
<dbReference type="PDBsum" id="1VVJ"/>
<dbReference type="PDBsum" id="1VY4"/>
<dbReference type="PDBsum" id="1VY5"/>
<dbReference type="PDBsum" id="1VY6"/>
<dbReference type="PDBsum" id="1VY7"/>
<dbReference type="PDBsum" id="1XMO"/>
<dbReference type="PDBsum" id="1XMQ"/>
<dbReference type="PDBsum" id="1XNQ"/>
<dbReference type="PDBsum" id="1XNR"/>
<dbReference type="PDBsum" id="2E5L"/>
<dbReference type="PDBsum" id="2F4V"/>
<dbReference type="PDBsum" id="2HHH"/>
<dbReference type="PDBsum" id="2UU9"/>
<dbReference type="PDBsum" id="2UUA"/>
<dbReference type="PDBsum" id="2UUB"/>
<dbReference type="PDBsum" id="2UUC"/>
<dbReference type="PDBsum" id="2ZM6"/>
<dbReference type="PDBsum" id="3OTO"/>
<dbReference type="PDBsum" id="4AQY"/>
<dbReference type="PDBsum" id="4B3M"/>
<dbReference type="PDBsum" id="4B3R"/>
<dbReference type="PDBsum" id="4B3S"/>
<dbReference type="PDBsum" id="4B3T"/>
<dbReference type="PDBsum" id="4DR1"/>
<dbReference type="PDBsum" id="4DR2"/>
<dbReference type="PDBsum" id="4DR3"/>
<dbReference type="PDBsum" id="4DR4"/>
<dbReference type="PDBsum" id="4DR5"/>
<dbReference type="PDBsum" id="4DR6"/>
<dbReference type="PDBsum" id="4DR7"/>
<dbReference type="PDBsum" id="4DUY"/>
<dbReference type="PDBsum" id="4DUZ"/>
<dbReference type="PDBsum" id="4DV0"/>
<dbReference type="PDBsum" id="4DV1"/>
<dbReference type="PDBsum" id="4DV2"/>
<dbReference type="PDBsum" id="4DV3"/>
<dbReference type="PDBsum" id="4DV4"/>
<dbReference type="PDBsum" id="4DV5"/>
<dbReference type="PDBsum" id="4DV6"/>
<dbReference type="PDBsum" id="4DV7"/>
<dbReference type="PDBsum" id="4GKJ"/>
<dbReference type="PDBsum" id="4GKK"/>
<dbReference type="PDBsum" id="4JI0"/>
<dbReference type="PDBsum" id="4JI1"/>
<dbReference type="PDBsum" id="4JI2"/>
<dbReference type="PDBsum" id="4JI3"/>
<dbReference type="PDBsum" id="4JI4"/>
<dbReference type="PDBsum" id="4JI5"/>
<dbReference type="PDBsum" id="4JI6"/>
<dbReference type="PDBsum" id="4JI7"/>
<dbReference type="PDBsum" id="4JI8"/>
<dbReference type="PDBsum" id="4JV5"/>
<dbReference type="PDBsum" id="4JYA"/>
<dbReference type="PDBsum" id="4K0K"/>
<dbReference type="PDBsum" id="4KHP"/>
<dbReference type="PDBsum" id="4L47"/>
<dbReference type="PDBsum" id="4L71"/>
<dbReference type="PDBsum" id="4LEL"/>
<dbReference type="PDBsum" id="4LF4"/>
<dbReference type="PDBsum" id="4LF5"/>
<dbReference type="PDBsum" id="4LF6"/>
<dbReference type="PDBsum" id="4LF7"/>
<dbReference type="PDBsum" id="4LF8"/>
<dbReference type="PDBsum" id="4LF9"/>
<dbReference type="PDBsum" id="4LFA"/>
<dbReference type="PDBsum" id="4LFB"/>
<dbReference type="PDBsum" id="4LFC"/>
<dbReference type="PDBsum" id="4LFZ"/>
<dbReference type="PDBsum" id="4LNT"/>
<dbReference type="PDBsum" id="4LSK"/>
<dbReference type="PDBsum" id="4LT8"/>
<dbReference type="PDBsum" id="4NXM"/>
<dbReference type="PDBsum" id="4NXN"/>
<dbReference type="PDBsum" id="4OX9"/>
<dbReference type="PDBsum" id="4P6F"/>
<dbReference type="PDBsum" id="4P70"/>
<dbReference type="PDBsum" id="4TUA"/>
<dbReference type="PDBsum" id="4TUB"/>
<dbReference type="PDBsum" id="4TUC"/>
<dbReference type="PDBsum" id="4TUD"/>
<dbReference type="PDBsum" id="4TUE"/>
<dbReference type="PDBsum" id="4V42"/>
<dbReference type="PDBsum" id="4V49"/>
<dbReference type="PDBsum" id="4V4A"/>
<dbReference type="PDBsum" id="4V4I"/>
<dbReference type="PDBsum" id="4V4P"/>
<dbReference type="PDBsum" id="4V4R"/>
<dbReference type="PDBsum" id="4V4S"/>
<dbReference type="PDBsum" id="4V4T"/>
<dbReference type="PDBsum" id="4V4X"/>
<dbReference type="PDBsum" id="4V4Y"/>
<dbReference type="PDBsum" id="4V4Z"/>
<dbReference type="PDBsum" id="4V5E"/>
<dbReference type="PDBsum" id="4V5F"/>
<dbReference type="PDBsum" id="4V5G"/>
<dbReference type="PDBsum" id="4V5J"/>
<dbReference type="PDBsum" id="4V5K"/>
<dbReference type="PDBsum" id="4V5L"/>
<dbReference type="PDBsum" id="4V5M"/>
<dbReference type="PDBsum" id="4V5N"/>
<dbReference type="PDBsum" id="4V5P"/>
<dbReference type="PDBsum" id="4V5Q"/>
<dbReference type="PDBsum" id="4V5R"/>
<dbReference type="PDBsum" id="4V5S"/>
<dbReference type="PDBsum" id="4V68"/>
<dbReference type="PDBsum" id="4V6A"/>
<dbReference type="PDBsum" id="4V6F"/>
<dbReference type="PDBsum" id="4V6G"/>
<dbReference type="PDBsum" id="4V7J"/>
<dbReference type="PDBsum" id="4V7K"/>
<dbReference type="PDBsum" id="4V7L"/>
<dbReference type="PDBsum" id="4V7M"/>
<dbReference type="PDBsum" id="4V7W"/>
<dbReference type="PDBsum" id="4V7X"/>
<dbReference type="PDBsum" id="4V7Y"/>
<dbReference type="PDBsum" id="4V7Z"/>
<dbReference type="PDBsum" id="4V87"/>
<dbReference type="PDBsum" id="4V8A"/>
<dbReference type="PDBsum" id="4V8B"/>
<dbReference type="PDBsum" id="4V8C"/>
<dbReference type="PDBsum" id="4V8D"/>
<dbReference type="PDBsum" id="4V8E"/>
<dbReference type="PDBsum" id="4V8F"/>
<dbReference type="PDBsum" id="4V8G"/>
<dbReference type="PDBsum" id="4V8H"/>
<dbReference type="PDBsum" id="4V8I"/>
<dbReference type="PDBsum" id="4V8J"/>
<dbReference type="PDBsum" id="4V8N"/>
<dbReference type="PDBsum" id="4V8O"/>
<dbReference type="PDBsum" id="4V8Q"/>
<dbReference type="PDBsum" id="4V8U"/>
<dbReference type="PDBsum" id="4V8X"/>
<dbReference type="PDBsum" id="4V90"/>
<dbReference type="PDBsum" id="4V95"/>
<dbReference type="PDBsum" id="4V97"/>
<dbReference type="PDBsum" id="4V9A"/>
<dbReference type="PDBsum" id="4V9B"/>
<dbReference type="PDBsum" id="4V9H"/>
<dbReference type="PDBsum" id="4V9I"/>
<dbReference type="PDBsum" id="4V9R"/>
<dbReference type="PDBsum" id="4V9S"/>
<dbReference type="PDBsum" id="4W2E"/>
<dbReference type="PDBsum" id="4W2F"/>
<dbReference type="PDBsum" id="4W2G"/>
<dbReference type="PDBsum" id="4W2H"/>
<dbReference type="PDBsum" id="4W2I"/>
<dbReference type="PDBsum" id="4W4G"/>
<dbReference type="PDBsum" id="4WPO"/>
<dbReference type="PDBsum" id="4WQ1"/>
<dbReference type="PDBsum" id="4WQF"/>
<dbReference type="PDBsum" id="4WQR"/>
<dbReference type="PDBsum" id="4WQU"/>
<dbReference type="PDBsum" id="4WQY"/>
<dbReference type="PDBsum" id="4WR6"/>
<dbReference type="PDBsum" id="4WRA"/>
<dbReference type="PDBsum" id="4WRO"/>
<dbReference type="PDBsum" id="4WSD"/>
<dbReference type="PDBsum" id="4WSM"/>
<dbReference type="PDBsum" id="4WT1"/>
<dbReference type="PDBsum" id="4WT8"/>
<dbReference type="PDBsum" id="4WU1"/>
<dbReference type="PDBsum" id="4WZD"/>
<dbReference type="PDBsum" id="4WZO"/>
<dbReference type="PDBsum" id="4X62"/>
<dbReference type="PDBsum" id="4X64"/>
<dbReference type="PDBsum" id="4X65"/>
<dbReference type="PDBsum" id="4X66"/>
<dbReference type="PDBsum" id="4Y4O"/>
<dbReference type="PDBsum" id="4Y4P"/>
<dbReference type="PDBsum" id="4YHH"/>
<dbReference type="PDBsum" id="4YPB"/>
<dbReference type="PDBsum" id="4YY3"/>
<dbReference type="PDBsum" id="4YZV"/>
<dbReference type="PDBsum" id="4Z3S"/>
<dbReference type="PDBsum" id="4Z8C"/>
<dbReference type="PDBsum" id="4ZER"/>
<dbReference type="PDBsum" id="4ZSN"/>
<dbReference type="PDBsum" id="5A9Z"/>
<dbReference type="PDBsum" id="5AA0"/>
<dbReference type="PDBsum" id="5BR8"/>
<dbReference type="PDBsum" id="5CZP"/>
<dbReference type="PDBsum" id="5D8B"/>
<dbReference type="PDBsum" id="5DFE"/>
<dbReference type="PDBsum" id="5DOX"/>
<dbReference type="PDBsum" id="5DOY"/>
<dbReference type="PDBsum" id="5E7K"/>
<dbReference type="PDBsum" id="5E81"/>
<dbReference type="PDBsum" id="5EL4"/>
<dbReference type="PDBsum" id="5EL5"/>
<dbReference type="PDBsum" id="5EL6"/>
<dbReference type="PDBsum" id="5EL7"/>
<dbReference type="PDBsum" id="5F8K"/>
<dbReference type="PDBsum" id="5FDU"/>
<dbReference type="PDBsum" id="5FDV"/>
<dbReference type="PDBsum" id="5HAU"/>
<dbReference type="PDBsum" id="5HCP"/>
<dbReference type="PDBsum" id="5HCQ"/>
<dbReference type="PDBsum" id="5HCR"/>
<dbReference type="PDBsum" id="5HD1"/>
<dbReference type="PDBsum" id="5IB7"/>
<dbReference type="PDBsum" id="5IB8"/>
<dbReference type="PDBsum" id="5IBB"/>
<dbReference type="PDBsum" id="5IMQ"/>
<dbReference type="PDBsum" id="5IMR"/>
<dbReference type="PDBsum" id="5IWA"/>
<dbReference type="PDBsum" id="5J30"/>
<dbReference type="PDBsum" id="5J3C"/>
<dbReference type="PDBsum" id="5J4B"/>
<dbReference type="PDBsum" id="5J4C"/>
<dbReference type="PDBsum" id="5J8B"/>
<dbReference type="PDBsum" id="5LMN"/>
<dbReference type="PDBsum" id="5LMO"/>
<dbReference type="PDBsum" id="5LMP"/>
<dbReference type="PDBsum" id="5LMQ"/>
<dbReference type="PDBsum" id="5LMR"/>
<dbReference type="PDBsum" id="5LMS"/>
<dbReference type="PDBsum" id="5LMT"/>
<dbReference type="PDBsum" id="5LMU"/>
<dbReference type="PDBsum" id="5LMV"/>
<dbReference type="PDBsum" id="5NDJ"/>
<dbReference type="PDBsum" id="5NDK"/>
<dbReference type="PDBsum" id="5OT7"/>
<dbReference type="PDBsum" id="5UQ7"/>
<dbReference type="PDBsum" id="5UQ8"/>
<dbReference type="PDBsum" id="5VP2"/>
<dbReference type="PDBsum" id="5VPO"/>
<dbReference type="PDBsum" id="5VPP"/>
<dbReference type="PDBsum" id="5W4K"/>
<dbReference type="PDBsum" id="5WIS"/>
<dbReference type="PDBsum" id="5WIT"/>
<dbReference type="PDBsum" id="5WNP"/>
<dbReference type="PDBsum" id="5WNQ"/>
<dbReference type="PDBsum" id="5WNR"/>
<dbReference type="PDBsum" id="5WNS"/>
<dbReference type="PDBsum" id="5WNT"/>
<dbReference type="PDBsum" id="5WNU"/>
<dbReference type="PDBsum" id="5WNV"/>
<dbReference type="PDBsum" id="5ZLU"/>
<dbReference type="PDBsum" id="6BUW"/>
<dbReference type="PDBsum" id="6BZ6"/>
<dbReference type="PDBsum" id="6BZ7"/>
<dbReference type="PDBsum" id="6BZ8"/>
<dbReference type="PDBsum" id="6C5L"/>
<dbReference type="PDBsum" id="6CAE"/>
<dbReference type="PDBsum" id="6CAO"/>
<dbReference type="PDBsum" id="6CAP"/>
<dbReference type="PDBsum" id="6CAQ"/>
<dbReference type="PDBsum" id="6CAR"/>
<dbReference type="PDBsum" id="6CAS"/>
<dbReference type="PDBsum" id="6CFJ"/>
<dbReference type="PDBsum" id="6CFK"/>
<dbReference type="PDBsum" id="6CFL"/>
<dbReference type="PDBsum" id="6CZR"/>
<dbReference type="PDBsum" id="6DTI"/>
<dbReference type="PDBsum" id="6FKR"/>
<dbReference type="PDBsum" id="6GSJ"/>
<dbReference type="PDBsum" id="6GSK"/>
<dbReference type="PDBsum" id="6GSL"/>
<dbReference type="PDBsum" id="6GZQ"/>
<dbReference type="PDBsum" id="6GZX"/>
<dbReference type="PDBsum" id="6GZZ"/>
<dbReference type="PDBsum" id="6MKN"/>
<dbReference type="PDBsum" id="6MPF"/>
<dbReference type="PDBsum" id="6MPI"/>
<dbReference type="PDBsum" id="6N9E"/>
<dbReference type="PDBsum" id="6N9F"/>
<dbReference type="PDBsum" id="6ND5"/>
<dbReference type="PDBsum" id="6ND6"/>
<dbReference type="PDBsum" id="6NDK"/>
<dbReference type="PDBsum" id="6NSH"/>
<dbReference type="PDBsum" id="6NTA"/>
<dbReference type="PDBsum" id="6NUO"/>
<dbReference type="PDBsum" id="6NWY"/>
<dbReference type="PDBsum" id="6NY6"/>
<dbReference type="PDBsum" id="6O3M"/>
<dbReference type="PDBsum" id="6O97"/>
<dbReference type="PDBsum" id="6OF1"/>
<dbReference type="PDBsum" id="6OF6"/>
<dbReference type="PDBsum" id="6OJ2"/>
<dbReference type="PDBsum" id="6OPE"/>
<dbReference type="PDBsum" id="6ORD"/>
<dbReference type="PDBsum" id="6OSI"/>
<dbReference type="PDBsum" id="6OTR"/>
<dbReference type="PDBsum" id="6OXA"/>
<dbReference type="PDBsum" id="6OXI"/>
<dbReference type="PDBsum" id="6Q95"/>
<dbReference type="PDBsum" id="6QNQ"/>
<dbReference type="PDBsum" id="6QNR"/>
<dbReference type="PDBsum" id="6UCQ"/>
<dbReference type="PDBsum" id="6UO1"/>
<dbReference type="PDBsum" id="6XHV"/>
<dbReference type="PDBsum" id="6XHW"/>
<dbReference type="PDBsum" id="6XHX"/>
<dbReference type="PDBsum" id="6XHY"/>
<dbReference type="PDBsum" id="6XQD"/>
<dbReference type="PDBsum" id="6XQE"/>
<dbReference type="PDBsum" id="7AZO"/>
<dbReference type="PDBsum" id="7AZS"/>
<dbReference type="PDBsum" id="7DUG"/>
<dbReference type="PDBsum" id="7DUH"/>
<dbReference type="PDBsum" id="7DUI"/>
<dbReference type="PDBsum" id="7DUJ"/>
<dbReference type="PDBsum" id="7DUK"/>
<dbReference type="PDBsum" id="7DUL"/>
<dbReference type="PDBsum" id="7JQL"/>
<dbReference type="PDBsum" id="7JQM"/>
<dbReference type="PDBsum" id="7LH5"/>
<dbReference type="PDBsum" id="7MD7"/>
<dbReference type="PDBsum" id="7RQ8"/>
<dbReference type="PDBsum" id="7RQ9"/>
<dbReference type="PDBsum" id="7RQA"/>
<dbReference type="PDBsum" id="7RQB"/>
<dbReference type="PDBsum" id="7RQC"/>
<dbReference type="PDBsum" id="7RQD"/>
<dbReference type="PDBsum" id="7RQE"/>
<dbReference type="PDBsum" id="7U2H"/>
<dbReference type="PDBsum" id="7U2I"/>
<dbReference type="PDBsum" id="7U2J"/>
<dbReference type="PDBsum" id="7V2L"/>
<dbReference type="PDBsum" id="7V2M"/>
<dbReference type="PDBsum" id="7V2N"/>
<dbReference type="PDBsum" id="7V2O"/>
<dbReference type="PDBsum" id="7V2P"/>
<dbReference type="PDBsum" id="7V2Q"/>
<dbReference type="PDBsum" id="8CVJ"/>
<dbReference type="PDBsum" id="8CVK"/>
<dbReference type="PDBsum" id="8CVL"/>
<dbReference type="PDBsum" id="8EKB"/>
<dbReference type="PDBsum" id="8EV6"/>
<dbReference type="PDBsum" id="8EV7"/>
<dbReference type="PDBsum" id="8FC1"/>
<dbReference type="PDBsum" id="8FC2"/>
<dbReference type="PDBsum" id="8FC3"/>
<dbReference type="PDBsum" id="8FC4"/>
<dbReference type="PDBsum" id="8FC5"/>
<dbReference type="PDBsum" id="8FC6"/>
<dbReference type="PDBsum" id="8FOM"/>
<dbReference type="PDBsum" id="8FON"/>
<dbReference type="PDBsum" id="8G29"/>
<dbReference type="PDBsum" id="8G2A"/>
<dbReference type="PDBsum" id="8G2B"/>
<dbReference type="PDBsum" id="8G2C"/>
<dbReference type="PDBsum" id="8G2D"/>
<dbReference type="PDBsum" id="8T8B"/>
<dbReference type="PDBsum" id="8T8C"/>
<dbReference type="PDBsum" id="8UD6"/>
<dbReference type="PDBsum" id="8UD7"/>
<dbReference type="PDBsum" id="8UD8"/>
<dbReference type="PDBsum" id="8UVR"/>
<dbReference type="PDBsum" id="8UVS"/>
<dbReference type="PDBsum" id="8VTU"/>
<dbReference type="PDBsum" id="8VTV"/>
<dbReference type="PDBsum" id="8VTW"/>
<dbReference type="PDBsum" id="8VTX"/>
<dbReference type="PDBsum" id="8VTY"/>
<dbReference type="PDBsum" id="9B00"/>
<dbReference type="PDBsum" id="9D0J"/>
<dbReference type="PDBsum" id="9D7R"/>
<dbReference type="PDBsum" id="9D7S"/>
<dbReference type="PDBsum" id="9D7T"/>
<dbReference type="PDBsum" id="9DFC"/>
<dbReference type="PDBsum" id="9DFD"/>
<dbReference type="PDBsum" id="9DFE"/>
<dbReference type="EMDB" id="EMD-0101"/>
<dbReference type="EMDB" id="EMD-0104"/>
<dbReference type="EMDB" id="EMD-0105"/>
<dbReference type="EMDB" id="EMD-31655"/>
<dbReference type="EMDB" id="EMD-31656"/>
<dbReference type="EMDB" id="EMD-31657"/>
<dbReference type="EMDB" id="EMD-31658"/>
<dbReference type="EMDB" id="EMD-31659"/>
<dbReference type="EMDB" id="EMD-31660"/>
<dbReference type="EMDB" id="EMD-3852"/>
<dbReference type="EMDB" id="EMD-4073"/>
<dbReference type="EMDB" id="EMD-4074"/>
<dbReference type="EMDB" id="EMD-4075"/>
<dbReference type="EMDB" id="EMD-4076"/>
<dbReference type="EMDB" id="EMD-4077"/>
<dbReference type="EMDB" id="EMD-4078"/>
<dbReference type="EMDB" id="EMD-4079"/>
<dbReference type="EMDB" id="EMD-4080"/>
<dbReference type="EMDB" id="EMD-4083"/>
<dbReference type="EMDB" id="EMD-4475"/>
<dbReference type="EMDB" id="EMD-6934"/>
<dbReference type="EMDB" id="EMD-8596"/>
<dbReference type="EMDB" id="EMD-8597"/>
<dbReference type="SMR" id="P80374"/>
<dbReference type="IntAct" id="P80374">
    <property type="interactions" value="10"/>
</dbReference>
<dbReference type="DrugBank" id="DB08185">
    <property type="generic name" value="2-METHYLTHIO-N6-ISOPENTENYL-ADENOSINE-5'-MONOPHOSPHATE"/>
</dbReference>
<dbReference type="EnsemblBacteria" id="BAD71287">
    <property type="protein sequence ID" value="BAD71287"/>
    <property type="gene ID" value="BAD71287"/>
</dbReference>
<dbReference type="GeneID" id="3169752"/>
<dbReference type="KEGG" id="ttj:TTHA1464"/>
<dbReference type="PATRIC" id="fig|300852.9.peg.1438"/>
<dbReference type="eggNOG" id="COG0103">
    <property type="taxonomic scope" value="Bacteria"/>
</dbReference>
<dbReference type="HOGENOM" id="CLU_046483_2_1_0"/>
<dbReference type="PhylomeDB" id="P80374"/>
<dbReference type="EvolutionaryTrace" id="P80374"/>
<dbReference type="Proteomes" id="UP000000532">
    <property type="component" value="Chromosome"/>
</dbReference>
<dbReference type="GO" id="GO:0022627">
    <property type="term" value="C:cytosolic small ribosomal subunit"/>
    <property type="evidence" value="ECO:0007669"/>
    <property type="project" value="TreeGrafter"/>
</dbReference>
<dbReference type="GO" id="GO:0019843">
    <property type="term" value="F:rRNA binding"/>
    <property type="evidence" value="ECO:0007669"/>
    <property type="project" value="UniProtKB-KW"/>
</dbReference>
<dbReference type="GO" id="GO:0003735">
    <property type="term" value="F:structural constituent of ribosome"/>
    <property type="evidence" value="ECO:0007669"/>
    <property type="project" value="InterPro"/>
</dbReference>
<dbReference type="GO" id="GO:0000049">
    <property type="term" value="F:tRNA binding"/>
    <property type="evidence" value="ECO:0007669"/>
    <property type="project" value="UniProtKB-KW"/>
</dbReference>
<dbReference type="GO" id="GO:0006412">
    <property type="term" value="P:translation"/>
    <property type="evidence" value="ECO:0007669"/>
    <property type="project" value="UniProtKB-UniRule"/>
</dbReference>
<dbReference type="FunFam" id="3.30.230.10:FF:000001">
    <property type="entry name" value="30S ribosomal protein S9"/>
    <property type="match status" value="1"/>
</dbReference>
<dbReference type="Gene3D" id="3.30.230.10">
    <property type="match status" value="1"/>
</dbReference>
<dbReference type="HAMAP" id="MF_00532_B">
    <property type="entry name" value="Ribosomal_uS9_B"/>
    <property type="match status" value="1"/>
</dbReference>
<dbReference type="InterPro" id="IPR020568">
    <property type="entry name" value="Ribosomal_Su5_D2-typ_SF"/>
</dbReference>
<dbReference type="InterPro" id="IPR000754">
    <property type="entry name" value="Ribosomal_uS9"/>
</dbReference>
<dbReference type="InterPro" id="IPR023035">
    <property type="entry name" value="Ribosomal_uS9_bac/plastid"/>
</dbReference>
<dbReference type="InterPro" id="IPR020574">
    <property type="entry name" value="Ribosomal_uS9_CS"/>
</dbReference>
<dbReference type="InterPro" id="IPR014721">
    <property type="entry name" value="Ribsml_uS5_D2-typ_fold_subgr"/>
</dbReference>
<dbReference type="NCBIfam" id="NF001099">
    <property type="entry name" value="PRK00132.1"/>
    <property type="match status" value="1"/>
</dbReference>
<dbReference type="PANTHER" id="PTHR21569">
    <property type="entry name" value="RIBOSOMAL PROTEIN S9"/>
    <property type="match status" value="1"/>
</dbReference>
<dbReference type="PANTHER" id="PTHR21569:SF1">
    <property type="entry name" value="SMALL RIBOSOMAL SUBUNIT PROTEIN US9M"/>
    <property type="match status" value="1"/>
</dbReference>
<dbReference type="Pfam" id="PF00380">
    <property type="entry name" value="Ribosomal_S9"/>
    <property type="match status" value="1"/>
</dbReference>
<dbReference type="SUPFAM" id="SSF54211">
    <property type="entry name" value="Ribosomal protein S5 domain 2-like"/>
    <property type="match status" value="1"/>
</dbReference>
<dbReference type="PROSITE" id="PS00360">
    <property type="entry name" value="RIBOSOMAL_S9"/>
    <property type="match status" value="1"/>
</dbReference>
<organism>
    <name type="scientific">Thermus thermophilus (strain ATCC 27634 / DSM 579 / HB8)</name>
    <dbReference type="NCBI Taxonomy" id="300852"/>
    <lineage>
        <taxon>Bacteria</taxon>
        <taxon>Thermotogati</taxon>
        <taxon>Deinococcota</taxon>
        <taxon>Deinococci</taxon>
        <taxon>Thermales</taxon>
        <taxon>Thermaceae</taxon>
        <taxon>Thermus</taxon>
    </lineage>
</organism>
<reference key="1">
    <citation type="submission" date="2004-11" db="EMBL/GenBank/DDBJ databases">
        <title>Complete genome sequence of Thermus thermophilus HB8.</title>
        <authorList>
            <person name="Masui R."/>
            <person name="Kurokawa K."/>
            <person name="Nakagawa N."/>
            <person name="Tokunaga F."/>
            <person name="Koyama Y."/>
            <person name="Shibata T."/>
            <person name="Oshima T."/>
            <person name="Yokoyama S."/>
            <person name="Yasunaga T."/>
            <person name="Kuramitsu S."/>
        </authorList>
    </citation>
    <scope>NUCLEOTIDE SEQUENCE [LARGE SCALE GENOMIC DNA]</scope>
    <source>
        <strain>ATCC 27634 / DSM 579 / HB8</strain>
    </source>
</reference>
<reference key="2">
    <citation type="journal article" date="1994" name="Eur. J. Biochem.">
        <title>Purification and characterization of the 30S ribosomal proteins from the bacterium Thermus thermophilus.</title>
        <authorList>
            <person name="Tsiboli P."/>
            <person name="Herfurth E."/>
            <person name="Choli T."/>
        </authorList>
    </citation>
    <scope>PROTEIN SEQUENCE OF 1-28</scope>
</reference>
<reference key="3">
    <citation type="journal article" date="2005" name="Proteomics">
        <title>Extending ribosomal protein identifications to unsequenced bacterial strains using matrix-assisted laser desorption/ionization mass spectrometry.</title>
        <authorList>
            <person name="Suh M.-J."/>
            <person name="Hamburg D.M."/>
            <person name="Gregory S.T."/>
            <person name="Dahlberg A.E."/>
            <person name="Limbach P.A."/>
        </authorList>
    </citation>
    <scope>MASS SPECTROMETRY</scope>
    <source>
        <strain>ATCC 27634 / DSM 579 / HB8</strain>
    </source>
</reference>
<reference key="4">
    <citation type="journal article" date="2000" name="Nature">
        <title>Structure of the 30S ribosomal subunit.</title>
        <authorList>
            <person name="Wimberly B.T."/>
            <person name="Brodersen D.E."/>
            <person name="Clemons W.M. Jr."/>
            <person name="Morgan-Warren R.J."/>
            <person name="Carter A.P."/>
            <person name="Vonrhein C."/>
            <person name="Hartsch T."/>
            <person name="Ramakrishnan V."/>
        </authorList>
    </citation>
    <scope>X-RAY CRYSTALLOGRAPHY (3.05 ANGSTROMS) OF THE 30S SUBUNIT</scope>
</reference>
<reference key="5">
    <citation type="journal article" date="2000" name="Cell">
        <title>Structure of functionally activated small ribosomal subunit at 3.3 A resolution.</title>
        <authorList>
            <person name="Schluenzen F."/>
            <person name="Tocilj A."/>
            <person name="Zarivach R."/>
            <person name="Harms J."/>
            <person name="Gluehmann M."/>
            <person name="Janell D."/>
            <person name="Bashan A."/>
            <person name="Bartels H."/>
            <person name="Agmon I."/>
            <person name="Franceschi F."/>
            <person name="Yonath A."/>
        </authorList>
    </citation>
    <scope>X-RAY CRYSTALLOGRAPHY (3.3 ANGSTROMS) OF THE 30S SUBUNIT</scope>
</reference>
<reference key="6">
    <citation type="journal article" date="2000" name="Cell">
        <title>The structural basis for the action of the antibiotics tetracycline, pactamycin, and hygromycin B on the 30S ribosomal subunit.</title>
        <authorList>
            <person name="Brodersen D.E."/>
            <person name="Clemons W.M. Jr."/>
            <person name="Carter A.P."/>
            <person name="Morgan-Warren R.J."/>
            <person name="Wimberly B.T."/>
            <person name="Ramakrishnan V."/>
        </authorList>
    </citation>
    <scope>X-RAY CRYSTALLOGRAPHY (3.3 ANGSTROMS) OF THE 30S SUBUNIT</scope>
</reference>
<reference key="7">
    <citation type="journal article" date="2000" name="Nature">
        <title>Functional insights from the structure of the 30S ribosomal subunit and its interactions with antibiotics.</title>
        <authorList>
            <person name="Carter A.P."/>
            <person name="Clemons W.M. Jr."/>
            <person name="Brodersen D.E."/>
            <person name="Morgan-Warren R.J."/>
            <person name="Wimberly B.T."/>
            <person name="Ramakrishnan V."/>
        </authorList>
    </citation>
    <scope>X-RAY CRYSTALLOGRAPHY (3.0 ANGSTROMS) OF THE 30S SUBUNIT</scope>
</reference>
<reference key="8">
    <citation type="journal article" date="2001" name="Cell">
        <title>The path of messenger RNA through the ribosome.</title>
        <authorList>
            <person name="Yusupova G.Z."/>
            <person name="Yusupov M.M."/>
            <person name="Cate J.H.D."/>
            <person name="Noller H.F."/>
        </authorList>
    </citation>
    <scope>X-RAY CRYSTALLOGRAPHY (5.0 ANGSTROMS) OF THE RIBOSOME</scope>
</reference>
<reference key="9">
    <citation type="journal article" date="2001" name="EMBO J.">
        <title>Crystal structures of complexes of the small ribosomal subunit with tetracycline, edeine and IF3.</title>
        <authorList>
            <person name="Pioletti M."/>
            <person name="Schluenzen F."/>
            <person name="Harms J."/>
            <person name="Zarivach R."/>
            <person name="Gluehmann M."/>
            <person name="Avila H."/>
            <person name="Bashan A."/>
            <person name="Bartels H."/>
            <person name="Auerbach T."/>
            <person name="Jacobi C."/>
            <person name="Hartsch T."/>
            <person name="Yonath A."/>
            <person name="Franceschi F."/>
        </authorList>
    </citation>
    <scope>X-RAY CRYSTALLOGRAPHY (3.2 ANGSTROMS) OF THE 30S SUBUNIT</scope>
</reference>
<reference key="10">
    <citation type="journal article" date="2001" name="Science">
        <title>Crystal structure of an initiation factor bound to the 30S ribosomal subunit.</title>
        <authorList>
            <person name="Carter A.P."/>
            <person name="Clemons W.M. Jr."/>
            <person name="Brodersen D.E."/>
            <person name="Morgan-Warren R.J."/>
            <person name="Hartsch T."/>
            <person name="Wimberly B.T."/>
            <person name="Ramakrishnan V."/>
        </authorList>
    </citation>
    <scope>X-RAY CRYSTALLOGRAPHY (3.2 ANGSTROMS) OF THE 30S SUBUNIT</scope>
</reference>
<reference key="11">
    <citation type="journal article" date="2001" name="Science">
        <title>Crystal structure of the ribosome at 5.5 A resolution.</title>
        <authorList>
            <person name="Yusupov M.M."/>
            <person name="Yusupova G.Z."/>
            <person name="Baucom A."/>
            <person name="Lieberman K."/>
            <person name="Earnest T.N."/>
            <person name="Cate J.H.D."/>
            <person name="Noller H.F."/>
        </authorList>
    </citation>
    <scope>X-RAY CRYSTALLOGRAPHY (5.5 ANGSTROMS) OF THE RIBOSOME</scope>
</reference>
<reference key="12">
    <citation type="journal article" date="2001" name="Science">
        <title>Recognition of cognate transfer RNA by the 30S ribosomal subunit.</title>
        <authorList>
            <person name="Ogle J.M."/>
            <person name="Brodersen D.E."/>
            <person name="Clemons W.M. Jr."/>
            <person name="Tarry M.J."/>
            <person name="Carter A.P."/>
            <person name="Ramakrishnan V."/>
        </authorList>
    </citation>
    <scope>X-RAY CRYSTALLOGRAPHY (3.11 ANGSTROMS) OF THE 30S SUBUNIT</scope>
</reference>
<reference key="13">
    <citation type="journal article" date="2002" name="J. Mol. Biol.">
        <title>Crystal structure of the 30S ribosomal subunit from Thermus thermophilus: structure of the proteins and their interactions with 16S RNA.</title>
        <authorList>
            <person name="Brodersen D.E."/>
            <person name="Clemons W.M. Jr."/>
            <person name="Carter A.P."/>
            <person name="Wimberly B.T."/>
            <person name="Ramakrishnan V."/>
        </authorList>
    </citation>
    <scope>X-RAY CRYSTALLOGRAPHY (3.05 ANGSTROMS) OF THE 30S SUBUNIT</scope>
</reference>
<reference key="14">
    <citation type="journal article" date="2005" name="Cell">
        <title>Crystal structures of the ribosome in complex with release factors RF1 and RF2 bound to a cognate stop codon.</title>
        <authorList>
            <person name="Petry S."/>
            <person name="Brodersen D.E."/>
            <person name="Murphy F.V."/>
            <person name="Dunham C.M."/>
            <person name="Selmer M."/>
            <person name="Tarry M.J."/>
            <person name="Kelley A.C."/>
            <person name="Ramakrishnan V."/>
        </authorList>
    </citation>
    <scope>X-RAY CRYSTALLOGRAPHY (5.90 ANGSTROMS) OF 70S RIBOSOME IN COMPLEX WITH RF1 OR RF2</scope>
    <scope>SUBUNIT</scope>
</reference>
<reference key="15">
    <citation type="journal article" date="2010" name="Proc. Natl. Acad. Sci. U.S.A.">
        <title>Structure of the 70S ribosome bound to release factor 2 and a substrate analog provides insights into catalysis of peptide release.</title>
        <authorList>
            <person name="Jin H."/>
            <person name="Kelley A.C."/>
            <person name="Loakes D."/>
            <person name="Ramakrishnan V."/>
        </authorList>
    </citation>
    <scope>X-RAY CRYSTALLOGRAPHY (3.10 ANGSTROMS) OF 70S RIBOSOME IN COMPLEX WITH RF2</scope>
    <scope>SUBUNIT</scope>
</reference>
<gene>
    <name type="primary">rpsI</name>
    <name type="synonym">rps9</name>
    <name type="ordered locus">TTHA1464</name>
</gene>
<protein>
    <recommendedName>
        <fullName evidence="2">Small ribosomal subunit protein uS9</fullName>
    </recommendedName>
    <alternativeName>
        <fullName>30S ribosomal protein S9</fullName>
    </alternativeName>
</protein>
<evidence type="ECO:0000269" key="1">
    <source>
    </source>
</evidence>
<evidence type="ECO:0000305" key="2"/>
<evidence type="ECO:0007829" key="3">
    <source>
        <dbReference type="PDB" id="2UUB"/>
    </source>
</evidence>